<protein>
    <recommendedName>
        <fullName>DNA topoisomerase 2-beta</fullName>
        <ecNumber evidence="3 6">5.6.2.2</ecNumber>
    </recommendedName>
    <alternativeName>
        <fullName>DNA topoisomerase II, beta isozyme</fullName>
    </alternativeName>
</protein>
<sequence>MAKSGGCGAGAGVGGGNGALTWVTLFDQNNAAKKEESETANKNDSSKKLSVERVYQKKTQLEHILLRPDTYIGSVEPLTQFMWVYDEDVGMNCREVTFVPGLYKIFDEILVNAADNKQRDKNMTCIKVSIDPESNIISIWNNGKGIPVVEHKVEKVYVPALIFGQLLTSSNYDDDEKKVTGGRNGYGAKLCNIFSTKFTVETACKEYKHSFKQTWMNNMMKTSEAKIKHFDGEDYTCITFQPDLSKFKMEKLDKDIVALMTRRAYDLAGSCRGVKVMFNGKKLPVNGFRSYVDLYVKDKLDETGVALKVIHELANERWDVCLTLSEKGFQQISFVNSIATTKGGRHVDYVVDQVVGKLIEVVKKKNKAGVSVKPFQVKNHIWVFINCLIENPTFDSQTKENMTLQPKSFGSKCQLSEKFFKAASNCGIVESILNWVKFKAQTQLNKKCSSVKYSKIKGIPKLDDANDAGGKHSLECTLILTEGDSAKSLAVSGLGVIGRDRYGVFPLRGKILNVREASHKQIMENAEINNIIKIVGLQYKKSYDDAESLKTLRYGKIMIMTDQDQDGSHIKGLLINFIHHNWPSLLKHGFLEEFITPIVKASKNKQELSFYSIPEFDEWKKHIENQKAWKIKYYKGLGTSTAKEAKEYFADMERHRILFRYAGPEDDAAITLAFSKKKIDDRKEWLTNFMEDRRQRRLHGLPEQFLYGTATKHLTYNDFINKELILFSNSDNERSIPSLVDGFKPGQRKVLFTCFKRNDKREVKVAQLAGSVAEMSAYHHGEQALMMTIVNLAQNFVGSNNINLLQPIGQFGTRLHGGKDAASPRYIFTMLSTLARLLFPAVDDNLLKFLYDDNQRVEPEWYIPIIPMVLINGAEGIGTGWACKLPNYDAREIVNNVRRMLDGLDPHPMLPNYKNFKGTIQELGQNQYAVSGEIFVVDRNTVEITELPVRTWTQVYKEQVLEPMLNGTDKTPALISDYKEYHTDTTVKFVVKMTEEKLAQAEAAGLHKVFKLQTTLTCNSMVLFDHMGCLKKYETVQDILKEFFDLRLSYYGLRKEWLVGMLGAESTKLNNQARFILEKIQGKITIENRSKKDLIQMLVQRGYESDPVKAWKEAQEKAAEEDETQNQHDDSSSDSGTPSGPDFNYILNMSLWSLTKEKVEELIKQRDAKGREVNDLKRKSPSDLWKEDLAAFVEELDKVESQEREDVLAGMSGKAIKGKVGKPKVKKLQLEETMPSPYGRRIIPEITAMKADASKKLLKKKKGDLDTAAVKVEFDEEFSGAPVEGAGEEALTPSVPINKGPKPKREKKEPGTRVRKTPTSSGKPSAKKVKKRNPWSDDESKSESDLEETEPVVIPRDSLLRRAAAERPKYTFDFSEEEDDDADDDDDDNNDLEELKVKASPITNDGEDEFVPSDGLDKDEYTFSPGKSKATPEKSLHDKKSQDFGNLFSFPSYSQKSEDDSAKFDSNEEDSASVFSPSFGLKQTDKVPSKTVAAKKGKPSSDTVPKPKRAPKQKKVVEAVNSDSDSEFGIPKKTTTPKGKGRGAKKRKASGSENEGDYNPGRKTSKTTSKKPKKTSFDQDSDVDIFPSDFPTEPPSLPRTGRARKEVKYFAESDEEEDDVDFAMFN</sequence>
<accession>Q02880</accession>
<accession>Q13600</accession>
<accession>Q9UMG8</accession>
<accession>Q9UQP8</accession>
<name>TOP2B_HUMAN</name>
<keyword id="KW-0002">3D-structure</keyword>
<keyword id="KW-0007">Acetylation</keyword>
<keyword id="KW-0025">Alternative splicing</keyword>
<keyword id="KW-0067">ATP-binding</keyword>
<keyword id="KW-1268">Autism spectrum disorder</keyword>
<keyword id="KW-0225">Disease variant</keyword>
<keyword id="KW-0238">DNA-binding</keyword>
<keyword id="KW-0413">Isomerase</keyword>
<keyword id="KW-1017">Isopeptide bond</keyword>
<keyword id="KW-0460">Magnesium</keyword>
<keyword id="KW-0479">Metal-binding</keyword>
<keyword id="KW-0547">Nucleotide-binding</keyword>
<keyword id="KW-0539">Nucleus</keyword>
<keyword id="KW-0597">Phosphoprotein</keyword>
<keyword id="KW-1267">Proteomics identification</keyword>
<keyword id="KW-1185">Reference proteome</keyword>
<keyword id="KW-0799">Topoisomerase</keyword>
<keyword id="KW-0832">Ubl conjugation</keyword>
<dbReference type="EC" id="5.6.2.2" evidence="3 6"/>
<dbReference type="EMBL" id="X68060">
    <property type="protein sequence ID" value="CAA48197.1"/>
    <property type="molecule type" value="mRNA"/>
</dbReference>
<dbReference type="EMBL" id="X71911">
    <property type="status" value="NOT_ANNOTATED_CDS"/>
    <property type="molecule type" value="Genomic_DNA"/>
</dbReference>
<dbReference type="EMBL" id="Z15111">
    <property type="protein sequence ID" value="CAA78815.1"/>
    <property type="molecule type" value="mRNA"/>
</dbReference>
<dbReference type="EMBL" id="Z15115">
    <property type="protein sequence ID" value="CAA78821.1"/>
    <property type="molecule type" value="mRNA"/>
</dbReference>
<dbReference type="EMBL" id="M27504">
    <property type="protein sequence ID" value="AAA61210.1"/>
    <property type="molecule type" value="mRNA"/>
</dbReference>
<dbReference type="EMBL" id="AJ011721">
    <property type="protein sequence ID" value="CAA09753.1"/>
    <property type="molecule type" value="Genomic_DNA"/>
</dbReference>
<dbReference type="EMBL" id="AJ011722">
    <property type="protein sequence ID" value="CAA09753.1"/>
    <property type="status" value="JOINED"/>
    <property type="molecule type" value="Genomic_DNA"/>
</dbReference>
<dbReference type="EMBL" id="AJ011723">
    <property type="protein sequence ID" value="CAA09753.1"/>
    <property type="status" value="JOINED"/>
    <property type="molecule type" value="Genomic_DNA"/>
</dbReference>
<dbReference type="EMBL" id="AJ011724">
    <property type="protein sequence ID" value="CAA09753.1"/>
    <property type="status" value="JOINED"/>
    <property type="molecule type" value="Genomic_DNA"/>
</dbReference>
<dbReference type="EMBL" id="AJ011725">
    <property type="protein sequence ID" value="CAA09753.1"/>
    <property type="status" value="JOINED"/>
    <property type="molecule type" value="Genomic_DNA"/>
</dbReference>
<dbReference type="EMBL" id="AJ011726">
    <property type="protein sequence ID" value="CAA09753.1"/>
    <property type="status" value="JOINED"/>
    <property type="molecule type" value="Genomic_DNA"/>
</dbReference>
<dbReference type="EMBL" id="AJ011727">
    <property type="protein sequence ID" value="CAA09753.1"/>
    <property type="status" value="JOINED"/>
    <property type="molecule type" value="Genomic_DNA"/>
</dbReference>
<dbReference type="EMBL" id="AJ011728">
    <property type="protein sequence ID" value="CAA09753.1"/>
    <property type="status" value="JOINED"/>
    <property type="molecule type" value="Genomic_DNA"/>
</dbReference>
<dbReference type="EMBL" id="AJ011729">
    <property type="protein sequence ID" value="CAA09753.1"/>
    <property type="status" value="JOINED"/>
    <property type="molecule type" value="Genomic_DNA"/>
</dbReference>
<dbReference type="EMBL" id="AJ011730">
    <property type="protein sequence ID" value="CAA09753.1"/>
    <property type="status" value="JOINED"/>
    <property type="molecule type" value="Genomic_DNA"/>
</dbReference>
<dbReference type="EMBL" id="AJ011731">
    <property type="protein sequence ID" value="CAA09753.1"/>
    <property type="status" value="JOINED"/>
    <property type="molecule type" value="Genomic_DNA"/>
</dbReference>
<dbReference type="EMBL" id="AJ011732">
    <property type="protein sequence ID" value="CAA09753.1"/>
    <property type="status" value="JOINED"/>
    <property type="molecule type" value="Genomic_DNA"/>
</dbReference>
<dbReference type="EMBL" id="X53662">
    <property type="protein sequence ID" value="CAA37706.1"/>
    <property type="molecule type" value="mRNA"/>
</dbReference>
<dbReference type="EMBL" id="U54831">
    <property type="protein sequence ID" value="AAB01982.1"/>
    <property type="molecule type" value="mRNA"/>
</dbReference>
<dbReference type="CCDS" id="CCDS46776.1">
    <molecule id="Q02880-2"/>
</dbReference>
<dbReference type="CCDS" id="CCDS82746.1">
    <molecule id="Q02880-1"/>
</dbReference>
<dbReference type="PIR" id="S26730">
    <property type="entry name" value="A39242"/>
</dbReference>
<dbReference type="RefSeq" id="NP_001059.2">
    <molecule id="Q02880-2"/>
    <property type="nucleotide sequence ID" value="NM_001068.3"/>
</dbReference>
<dbReference type="RefSeq" id="NP_001317629.1">
    <molecule id="Q02880-1"/>
    <property type="nucleotide sequence ID" value="NM_001330700.2"/>
</dbReference>
<dbReference type="PDB" id="3QX3">
    <property type="method" value="X-ray"/>
    <property type="resolution" value="2.16 A"/>
    <property type="chains" value="A/B=450-1206"/>
</dbReference>
<dbReference type="PDB" id="4G0U">
    <property type="method" value="X-ray"/>
    <property type="resolution" value="2.70 A"/>
    <property type="chains" value="A/B=450-1206"/>
</dbReference>
<dbReference type="PDB" id="4G0V">
    <property type="method" value="X-ray"/>
    <property type="resolution" value="2.55 A"/>
    <property type="chains" value="A/B=450-1206"/>
</dbReference>
<dbReference type="PDB" id="4G0W">
    <property type="method" value="X-ray"/>
    <property type="resolution" value="2.70 A"/>
    <property type="chains" value="A/B=450-1206"/>
</dbReference>
<dbReference type="PDB" id="4J3N">
    <property type="method" value="X-ray"/>
    <property type="resolution" value="2.30 A"/>
    <property type="chains" value="A/B=450-1206"/>
</dbReference>
<dbReference type="PDB" id="5GWI">
    <property type="method" value="X-ray"/>
    <property type="resolution" value="2.74 A"/>
    <property type="chains" value="A/B=450-1206"/>
</dbReference>
<dbReference type="PDB" id="5GWJ">
    <property type="method" value="X-ray"/>
    <property type="resolution" value="2.57 A"/>
    <property type="chains" value="A/B=450-1206"/>
</dbReference>
<dbReference type="PDB" id="5ZAD">
    <property type="method" value="X-ray"/>
    <property type="resolution" value="2.54 A"/>
    <property type="chains" value="A/B=450-1206"/>
</dbReference>
<dbReference type="PDB" id="5ZEN">
    <property type="method" value="X-ray"/>
    <property type="resolution" value="2.75 A"/>
    <property type="chains" value="A=450-1206"/>
</dbReference>
<dbReference type="PDB" id="5ZQF">
    <property type="method" value="X-ray"/>
    <property type="resolution" value="3.87 A"/>
    <property type="chains" value="A=450-1206"/>
</dbReference>
<dbReference type="PDB" id="5ZRF">
    <property type="method" value="X-ray"/>
    <property type="resolution" value="2.30 A"/>
    <property type="chains" value="A/B=450-1206"/>
</dbReference>
<dbReference type="PDB" id="7QFN">
    <property type="method" value="X-ray"/>
    <property type="resolution" value="2.62 A"/>
    <property type="chains" value="A=50-449"/>
</dbReference>
<dbReference type="PDB" id="7QFO">
    <property type="method" value="X-ray"/>
    <property type="resolution" value="1.90 A"/>
    <property type="chains" value="A=50-449"/>
</dbReference>
<dbReference type="PDB" id="7YQ8">
    <property type="method" value="EM"/>
    <property type="resolution" value="3.90 A"/>
    <property type="chains" value="A/B=1-1626"/>
</dbReference>
<dbReference type="PDB" id="7ZBG">
    <property type="method" value="X-ray"/>
    <property type="resolution" value="2.30 A"/>
    <property type="chains" value="A=50-449"/>
</dbReference>
<dbReference type="PDB" id="8KE7">
    <property type="method" value="X-ray"/>
    <property type="resolution" value="2.80 A"/>
    <property type="chains" value="A/B=450-1206"/>
</dbReference>
<dbReference type="PDBsum" id="3QX3"/>
<dbReference type="PDBsum" id="4G0U"/>
<dbReference type="PDBsum" id="4G0V"/>
<dbReference type="PDBsum" id="4G0W"/>
<dbReference type="PDBsum" id="4J3N"/>
<dbReference type="PDBsum" id="5GWI"/>
<dbReference type="PDBsum" id="5GWJ"/>
<dbReference type="PDBsum" id="5ZAD"/>
<dbReference type="PDBsum" id="5ZEN"/>
<dbReference type="PDBsum" id="5ZQF"/>
<dbReference type="PDBsum" id="5ZRF"/>
<dbReference type="PDBsum" id="7QFN"/>
<dbReference type="PDBsum" id="7QFO"/>
<dbReference type="PDBsum" id="7YQ8"/>
<dbReference type="PDBsum" id="7ZBG"/>
<dbReference type="PDBsum" id="8KE7"/>
<dbReference type="EMDB" id="EMD-34022"/>
<dbReference type="SMR" id="Q02880"/>
<dbReference type="BioGRID" id="113008">
    <property type="interactions" value="274"/>
</dbReference>
<dbReference type="CORUM" id="Q02880"/>
<dbReference type="FunCoup" id="Q02880">
    <property type="interactions" value="3904"/>
</dbReference>
<dbReference type="IntAct" id="Q02880">
    <property type="interactions" value="92"/>
</dbReference>
<dbReference type="MINT" id="Q02880"/>
<dbReference type="STRING" id="9606.ENSP00000264331"/>
<dbReference type="BindingDB" id="Q02880"/>
<dbReference type="ChEMBL" id="CHEMBL3396"/>
<dbReference type="DrugBank" id="DB04745">
    <property type="generic name" value="2-Hydroxyquinoline"/>
</dbReference>
<dbReference type="DrugBank" id="DB08651">
    <property type="generic name" value="3'-THIO-THYMIDINE-5'-PHOSPHATE"/>
</dbReference>
<dbReference type="DrugBank" id="DB11617">
    <property type="generic name" value="Aclarubicin"/>
</dbReference>
<dbReference type="DrugBank" id="DB06013">
    <property type="generic name" value="Aldoxorubicin"/>
</dbReference>
<dbReference type="DrugBank" id="DB05022">
    <property type="generic name" value="Amonafide"/>
</dbReference>
<dbReference type="DrugBank" id="DB00276">
    <property type="generic name" value="Amsacrine"/>
</dbReference>
<dbReference type="DrugBank" id="DB04975">
    <property type="generic name" value="Banoxantrone"/>
</dbReference>
<dbReference type="DrugBank" id="DB06362">
    <property type="generic name" value="Becatecarin"/>
</dbReference>
<dbReference type="DrugBank" id="DB17149">
    <property type="generic name" value="Berubicin"/>
</dbReference>
<dbReference type="DrugBank" id="DB00827">
    <property type="generic name" value="Cinoxacin"/>
</dbReference>
<dbReference type="DrugBank" id="DB03966">
    <property type="generic name" value="Clorobiocin"/>
</dbReference>
<dbReference type="DrugBank" id="DB00970">
    <property type="generic name" value="Dactinomycin"/>
</dbReference>
<dbReference type="DrugBank" id="DB12804">
    <property type="generic name" value="Daniquidone"/>
</dbReference>
<dbReference type="DrugBank" id="DB00694">
    <property type="generic name" value="Daunorubicin"/>
</dbReference>
<dbReference type="DrugBank" id="DB06421">
    <property type="generic name" value="Declopramide"/>
</dbReference>
<dbReference type="DrugBank" id="DB00380">
    <property type="generic name" value="Dexrazoxane"/>
</dbReference>
<dbReference type="DrugBank" id="DB00997">
    <property type="generic name" value="Doxorubicin"/>
</dbReference>
<dbReference type="DrugBank" id="DB17026">
    <property type="generic name" value="Ellipticine"/>
</dbReference>
<dbReference type="DrugBank" id="DB05129">
    <property type="generic name" value="Elsamitrucin"/>
</dbReference>
<dbReference type="DrugBank" id="DB00467">
    <property type="generic name" value="Enoxacin"/>
</dbReference>
<dbReference type="DrugBank" id="DB00445">
    <property type="generic name" value="Epirubicin"/>
</dbReference>
<dbReference type="DrugBank" id="DB00773">
    <property type="generic name" value="Etoposide"/>
</dbReference>
<dbReference type="DrugBank" id="DB04576">
    <property type="generic name" value="Fleroxacin"/>
</dbReference>
<dbReference type="DrugBank" id="DB06160">
    <property type="generic name" value="Garenoxacin"/>
</dbReference>
<dbReference type="DrugBank" id="DB12134">
    <property type="generic name" value="Gepotidacin"/>
</dbReference>
<dbReference type="DrugBank" id="DB01177">
    <property type="generic name" value="Idarubicin"/>
</dbReference>
<dbReference type="DrugBank" id="DB00978">
    <property type="generic name" value="Lomefloxacin"/>
</dbReference>
<dbReference type="DrugBank" id="DB04967">
    <property type="generic name" value="Lucanthone"/>
</dbReference>
<dbReference type="DrugBank" id="DB12622">
    <property type="generic name" value="Lupeol"/>
</dbReference>
<dbReference type="DrugBank" id="DB01204">
    <property type="generic name" value="Mitoxantrone"/>
</dbReference>
<dbReference type="DrugBank" id="DB00779">
    <property type="generic name" value="Nalidixic acid"/>
</dbReference>
<dbReference type="DrugBank" id="DB01059">
    <property type="generic name" value="Norfloxacin"/>
</dbReference>
<dbReference type="DrugBank" id="DB01051">
    <property type="generic name" value="Novobiocin"/>
</dbReference>
<dbReference type="DrugBank" id="DB00487">
    <property type="generic name" value="Pefloxacin"/>
</dbReference>
<dbReference type="DrugBank" id="DB04395">
    <property type="generic name" value="Phosphoaminophosphonic Acid-Adenylate Ester"/>
</dbReference>
<dbReference type="DrugBank" id="DB06193">
    <property type="generic name" value="Pixantrone"/>
</dbReference>
<dbReference type="DrugBank" id="DB01179">
    <property type="generic name" value="Podofilox"/>
</dbReference>
<dbReference type="DrugBank" id="DB12549">
    <property type="generic name" value="Pyrazoloacridine"/>
</dbReference>
<dbReference type="DrugBank" id="DB00817">
    <property type="generic name" value="Rosoxacin"/>
</dbReference>
<dbReference type="DrugBank" id="DB12410">
    <property type="generic name" value="Sabarubicin"/>
</dbReference>
<dbReference type="DrugBank" id="DB05488">
    <property type="generic name" value="Technetium Tc-99m ciprofloxacin"/>
</dbReference>
<dbReference type="DrugBank" id="DB00444">
    <property type="generic name" value="Teniposide"/>
</dbReference>
<dbReference type="DrugBank" id="DB04858">
    <property type="generic name" value="Tirapazamine"/>
</dbReference>
<dbReference type="DrugBank" id="DB00385">
    <property type="generic name" value="Valrubicin"/>
</dbReference>
<dbReference type="DrugBank" id="DB11999">
    <property type="generic name" value="Vosaroxin"/>
</dbReference>
<dbReference type="DrugBank" id="DB19306">
    <property type="generic name" value="XK-469 free acid"/>
</dbReference>
<dbReference type="DrugBank" id="DB06364">
    <property type="generic name" value="XR5944"/>
</dbReference>
<dbReference type="DrugBank" id="DB06042">
    <property type="generic name" value="ZEN-012"/>
</dbReference>
<dbReference type="DrugCentral" id="Q02880"/>
<dbReference type="GlyGen" id="Q02880">
    <property type="glycosylation" value="4 sites, 1 O-linked glycan (3 sites)"/>
</dbReference>
<dbReference type="iPTMnet" id="Q02880"/>
<dbReference type="PhosphoSitePlus" id="Q02880"/>
<dbReference type="SwissPalm" id="Q02880"/>
<dbReference type="BioMuta" id="TOP2B"/>
<dbReference type="DMDM" id="20141946"/>
<dbReference type="jPOST" id="Q02880"/>
<dbReference type="MassIVE" id="Q02880"/>
<dbReference type="PaxDb" id="9606-ENSP00000396704"/>
<dbReference type="PeptideAtlas" id="Q02880"/>
<dbReference type="ProteomicsDB" id="58133">
    <molecule id="Q02880-1"/>
</dbReference>
<dbReference type="ProteomicsDB" id="58134">
    <molecule id="Q02880-2"/>
</dbReference>
<dbReference type="Pumba" id="Q02880"/>
<dbReference type="Antibodypedia" id="3893">
    <property type="antibodies" value="292 antibodies from 36 providers"/>
</dbReference>
<dbReference type="DNASU" id="7155"/>
<dbReference type="Ensembl" id="ENST00000264331.9">
    <molecule id="Q02880-1"/>
    <property type="protein sequence ID" value="ENSP00000264331.4"/>
    <property type="gene ID" value="ENSG00000077097.17"/>
</dbReference>
<dbReference type="Ensembl" id="ENST00000435706.6">
    <molecule id="Q02880-2"/>
    <property type="protein sequence ID" value="ENSP00000396704.2"/>
    <property type="gene ID" value="ENSG00000077097.17"/>
</dbReference>
<dbReference type="GeneID" id="7155"/>
<dbReference type="KEGG" id="hsa:7155"/>
<dbReference type="MANE-Select" id="ENST00000264331.9">
    <property type="protein sequence ID" value="ENSP00000264331.4"/>
    <property type="RefSeq nucleotide sequence ID" value="NM_001330700.2"/>
    <property type="RefSeq protein sequence ID" value="NP_001317629.1"/>
</dbReference>
<dbReference type="UCSC" id="uc003cdj.4">
    <molecule id="Q02880-1"/>
    <property type="organism name" value="human"/>
</dbReference>
<dbReference type="AGR" id="HGNC:11990"/>
<dbReference type="CTD" id="7155"/>
<dbReference type="DisGeNET" id="7155"/>
<dbReference type="GeneCards" id="TOP2B"/>
<dbReference type="HGNC" id="HGNC:11990">
    <property type="gene designation" value="TOP2B"/>
</dbReference>
<dbReference type="HPA" id="ENSG00000077097">
    <property type="expression patterns" value="Low tissue specificity"/>
</dbReference>
<dbReference type="MalaCards" id="TOP2B"/>
<dbReference type="MIM" id="126431">
    <property type="type" value="gene"/>
</dbReference>
<dbReference type="MIM" id="609296">
    <property type="type" value="phenotype"/>
</dbReference>
<dbReference type="neXtProt" id="NX_Q02880"/>
<dbReference type="OpenTargets" id="ENSG00000077097"/>
<dbReference type="Orphanet" id="567502">
    <property type="disease" value="B-cell immunodeficiency-limb anomaly-urogenital malformation syndrome"/>
</dbReference>
<dbReference type="PharmGKB" id="PA36672"/>
<dbReference type="VEuPathDB" id="HostDB:ENSG00000077097"/>
<dbReference type="eggNOG" id="KOG0355">
    <property type="taxonomic scope" value="Eukaryota"/>
</dbReference>
<dbReference type="GeneTree" id="ENSGT00940000157921"/>
<dbReference type="InParanoid" id="Q02880"/>
<dbReference type="OMA" id="TWTQDFK"/>
<dbReference type="OrthoDB" id="276498at2759"/>
<dbReference type="PAN-GO" id="Q02880">
    <property type="GO annotations" value="3 GO annotations based on evolutionary models"/>
</dbReference>
<dbReference type="PhylomeDB" id="Q02880"/>
<dbReference type="TreeFam" id="TF105282"/>
<dbReference type="BRENDA" id="5.6.2.2">
    <property type="organism ID" value="2681"/>
</dbReference>
<dbReference type="BRENDA" id="5.99.1.3">
    <property type="organism ID" value="2681"/>
</dbReference>
<dbReference type="PathwayCommons" id="Q02880"/>
<dbReference type="Reactome" id="R-HSA-4615885">
    <property type="pathway name" value="SUMOylation of DNA replication proteins"/>
</dbReference>
<dbReference type="SignaLink" id="Q02880"/>
<dbReference type="SIGNOR" id="Q02880"/>
<dbReference type="BioGRID-ORCS" id="7155">
    <property type="hits" value="20 hits in 1166 CRISPR screens"/>
</dbReference>
<dbReference type="CD-CODE" id="232F8A39">
    <property type="entry name" value="P-body"/>
</dbReference>
<dbReference type="CD-CODE" id="91857CE7">
    <property type="entry name" value="Nucleolus"/>
</dbReference>
<dbReference type="ChiTaRS" id="TOP2B">
    <property type="organism name" value="human"/>
</dbReference>
<dbReference type="EvolutionaryTrace" id="Q02880"/>
<dbReference type="GeneWiki" id="TOP2B"/>
<dbReference type="GenomeRNAi" id="7155"/>
<dbReference type="Pharos" id="Q02880">
    <property type="development level" value="Tclin"/>
</dbReference>
<dbReference type="PRO" id="PR:Q02880"/>
<dbReference type="Proteomes" id="UP000005640">
    <property type="component" value="Chromosome 3"/>
</dbReference>
<dbReference type="RNAct" id="Q02880">
    <property type="molecule type" value="protein"/>
</dbReference>
<dbReference type="Bgee" id="ENSG00000077097">
    <property type="expression patterns" value="Expressed in ganglionic eminence and 206 other cell types or tissues"/>
</dbReference>
<dbReference type="ExpressionAtlas" id="Q02880">
    <property type="expression patterns" value="baseline and differential"/>
</dbReference>
<dbReference type="GO" id="GO:0005829">
    <property type="term" value="C:cytosol"/>
    <property type="evidence" value="ECO:0000314"/>
    <property type="project" value="UniProtKB"/>
</dbReference>
<dbReference type="GO" id="GO:0005730">
    <property type="term" value="C:nucleolus"/>
    <property type="evidence" value="ECO:0000314"/>
    <property type="project" value="UniProtKB"/>
</dbReference>
<dbReference type="GO" id="GO:0005654">
    <property type="term" value="C:nucleoplasm"/>
    <property type="evidence" value="ECO:0000314"/>
    <property type="project" value="HPA"/>
</dbReference>
<dbReference type="GO" id="GO:0005634">
    <property type="term" value="C:nucleus"/>
    <property type="evidence" value="ECO:0000314"/>
    <property type="project" value="UniProtKB"/>
</dbReference>
<dbReference type="GO" id="GO:1990904">
    <property type="term" value="C:ribonucleoprotein complex"/>
    <property type="evidence" value="ECO:0000250"/>
    <property type="project" value="UniProtKB"/>
</dbReference>
<dbReference type="GO" id="GO:0005524">
    <property type="term" value="F:ATP binding"/>
    <property type="evidence" value="ECO:0007669"/>
    <property type="project" value="UniProtKB-KW"/>
</dbReference>
<dbReference type="GO" id="GO:0003682">
    <property type="term" value="F:chromatin binding"/>
    <property type="evidence" value="ECO:0000314"/>
    <property type="project" value="UniProtKB"/>
</dbReference>
<dbReference type="GO" id="GO:0003677">
    <property type="term" value="F:DNA binding"/>
    <property type="evidence" value="ECO:0007669"/>
    <property type="project" value="UniProtKB-KW"/>
</dbReference>
<dbReference type="GO" id="GO:0003918">
    <property type="term" value="F:DNA topoisomerase type II (double strand cut, ATP-hydrolyzing) activity"/>
    <property type="evidence" value="ECO:0000314"/>
    <property type="project" value="UniProtKB"/>
</dbReference>
<dbReference type="GO" id="GO:0046872">
    <property type="term" value="F:metal ion binding"/>
    <property type="evidence" value="ECO:0007669"/>
    <property type="project" value="UniProtKB-KW"/>
</dbReference>
<dbReference type="GO" id="GO:0043021">
    <property type="term" value="F:ribonucleoprotein complex binding"/>
    <property type="evidence" value="ECO:0007669"/>
    <property type="project" value="Ensembl"/>
</dbReference>
<dbReference type="GO" id="GO:0007409">
    <property type="term" value="P:axonogenesis"/>
    <property type="evidence" value="ECO:0007669"/>
    <property type="project" value="Ensembl"/>
</dbReference>
<dbReference type="GO" id="GO:0030183">
    <property type="term" value="P:B cell differentiation"/>
    <property type="evidence" value="ECO:0000315"/>
    <property type="project" value="UniProtKB"/>
</dbReference>
<dbReference type="GO" id="GO:0071318">
    <property type="term" value="P:cellular response to ATP"/>
    <property type="evidence" value="ECO:0007669"/>
    <property type="project" value="Ensembl"/>
</dbReference>
<dbReference type="GO" id="GO:0070301">
    <property type="term" value="P:cellular response to hydrogen peroxide"/>
    <property type="evidence" value="ECO:0007669"/>
    <property type="project" value="Ensembl"/>
</dbReference>
<dbReference type="GO" id="GO:0090398">
    <property type="term" value="P:cellular senescence"/>
    <property type="evidence" value="ECO:0007669"/>
    <property type="project" value="Ensembl"/>
</dbReference>
<dbReference type="GO" id="GO:0006265">
    <property type="term" value="P:DNA topological change"/>
    <property type="evidence" value="ECO:0000314"/>
    <property type="project" value="UniProtKB"/>
</dbReference>
<dbReference type="GO" id="GO:0030900">
    <property type="term" value="P:forebrain development"/>
    <property type="evidence" value="ECO:0007669"/>
    <property type="project" value="Ensembl"/>
</dbReference>
<dbReference type="GO" id="GO:0001764">
    <property type="term" value="P:neuron migration"/>
    <property type="evidence" value="ECO:0007669"/>
    <property type="project" value="Ensembl"/>
</dbReference>
<dbReference type="GO" id="GO:2001034">
    <property type="term" value="P:positive regulation of double-strand break repair via nonhomologous end joining"/>
    <property type="evidence" value="ECO:0007669"/>
    <property type="project" value="Ensembl"/>
</dbReference>
<dbReference type="GO" id="GO:0045870">
    <property type="term" value="P:positive regulation of single stranded viral RNA replication via double stranded DNA intermediate"/>
    <property type="evidence" value="ECO:0000315"/>
    <property type="project" value="UniProtKB"/>
</dbReference>
<dbReference type="GO" id="GO:0000712">
    <property type="term" value="P:resolution of meiotic recombination intermediates"/>
    <property type="evidence" value="ECO:0000318"/>
    <property type="project" value="GO_Central"/>
</dbReference>
<dbReference type="GO" id="GO:0000819">
    <property type="term" value="P:sister chromatid segregation"/>
    <property type="evidence" value="ECO:0000318"/>
    <property type="project" value="GO_Central"/>
</dbReference>
<dbReference type="CDD" id="cd16930">
    <property type="entry name" value="HATPase_TopII-like"/>
    <property type="match status" value="1"/>
</dbReference>
<dbReference type="CDD" id="cd00187">
    <property type="entry name" value="TOP4c"/>
    <property type="match status" value="1"/>
</dbReference>
<dbReference type="CDD" id="cd03481">
    <property type="entry name" value="TopoIIA_Trans_ScTopoIIA"/>
    <property type="match status" value="1"/>
</dbReference>
<dbReference type="CDD" id="cd03365">
    <property type="entry name" value="TOPRIM_TopoIIA"/>
    <property type="match status" value="1"/>
</dbReference>
<dbReference type="FunFam" id="1.10.268.10:FF:000002">
    <property type="entry name" value="DNA topoisomerase 2"/>
    <property type="match status" value="1"/>
</dbReference>
<dbReference type="FunFam" id="3.30.1360.40:FF:000003">
    <property type="entry name" value="DNA topoisomerase 2"/>
    <property type="match status" value="1"/>
</dbReference>
<dbReference type="FunFam" id="3.30.1490.30:FF:000001">
    <property type="entry name" value="DNA topoisomerase 2"/>
    <property type="match status" value="1"/>
</dbReference>
<dbReference type="FunFam" id="3.30.230.10:FF:000008">
    <property type="entry name" value="DNA topoisomerase 2"/>
    <property type="match status" value="1"/>
</dbReference>
<dbReference type="FunFam" id="3.30.565.10:FF:000004">
    <property type="entry name" value="DNA topoisomerase 2"/>
    <property type="match status" value="1"/>
</dbReference>
<dbReference type="FunFam" id="3.40.50.670:FF:000001">
    <property type="entry name" value="DNA topoisomerase 2"/>
    <property type="match status" value="2"/>
</dbReference>
<dbReference type="FunFam" id="3.90.199.10:FF:000002">
    <property type="entry name" value="DNA topoisomerase 2"/>
    <property type="match status" value="1"/>
</dbReference>
<dbReference type="Gene3D" id="3.30.1360.40">
    <property type="match status" value="1"/>
</dbReference>
<dbReference type="Gene3D" id="3.30.1490.30">
    <property type="match status" value="1"/>
</dbReference>
<dbReference type="Gene3D" id="3.30.230.10">
    <property type="match status" value="1"/>
</dbReference>
<dbReference type="Gene3D" id="3.40.50.670">
    <property type="match status" value="1"/>
</dbReference>
<dbReference type="Gene3D" id="3.30.565.10">
    <property type="entry name" value="Histidine kinase-like ATPase, C-terminal domain"/>
    <property type="match status" value="1"/>
</dbReference>
<dbReference type="Gene3D" id="3.90.199.10">
    <property type="entry name" value="Topoisomerase II, domain 5"/>
    <property type="match status" value="1"/>
</dbReference>
<dbReference type="Gene3D" id="1.10.268.10">
    <property type="entry name" value="Topoisomerase, domain 3"/>
    <property type="match status" value="1"/>
</dbReference>
<dbReference type="IDEAL" id="IID00462"/>
<dbReference type="InterPro" id="IPR050634">
    <property type="entry name" value="DNA_Topoisomerase_II"/>
</dbReference>
<dbReference type="InterPro" id="IPR012542">
    <property type="entry name" value="DTHCT"/>
</dbReference>
<dbReference type="InterPro" id="IPR036890">
    <property type="entry name" value="HATPase_C_sf"/>
</dbReference>
<dbReference type="InterPro" id="IPR020568">
    <property type="entry name" value="Ribosomal_Su5_D2-typ_SF"/>
</dbReference>
<dbReference type="InterPro" id="IPR014721">
    <property type="entry name" value="Ribsml_uS5_D2-typ_fold_subgr"/>
</dbReference>
<dbReference type="InterPro" id="IPR001241">
    <property type="entry name" value="Topo_IIA"/>
</dbReference>
<dbReference type="InterPro" id="IPR013760">
    <property type="entry name" value="Topo_IIA-like_dom_sf"/>
</dbReference>
<dbReference type="InterPro" id="IPR013758">
    <property type="entry name" value="Topo_IIA_A/C_ab"/>
</dbReference>
<dbReference type="InterPro" id="IPR013757">
    <property type="entry name" value="Topo_IIA_A_a_sf"/>
</dbReference>
<dbReference type="InterPro" id="IPR013759">
    <property type="entry name" value="Topo_IIA_B_C"/>
</dbReference>
<dbReference type="InterPro" id="IPR013506">
    <property type="entry name" value="Topo_IIA_bsu_dom2"/>
</dbReference>
<dbReference type="InterPro" id="IPR002205">
    <property type="entry name" value="Topo_IIA_dom_A"/>
</dbReference>
<dbReference type="InterPro" id="IPR001154">
    <property type="entry name" value="TopoII_euk"/>
</dbReference>
<dbReference type="InterPro" id="IPR018522">
    <property type="entry name" value="TopoIIA_CS"/>
</dbReference>
<dbReference type="InterPro" id="IPR031660">
    <property type="entry name" value="TOPRIM_C"/>
</dbReference>
<dbReference type="InterPro" id="IPR006171">
    <property type="entry name" value="TOPRIM_dom"/>
</dbReference>
<dbReference type="InterPro" id="IPR034157">
    <property type="entry name" value="TOPRIM_TopoII"/>
</dbReference>
<dbReference type="PANTHER" id="PTHR10169:SF36">
    <property type="entry name" value="DNA TOPOISOMERASE 2-BETA"/>
    <property type="match status" value="1"/>
</dbReference>
<dbReference type="PANTHER" id="PTHR10169">
    <property type="entry name" value="DNA TOPOISOMERASE/GYRASE"/>
    <property type="match status" value="1"/>
</dbReference>
<dbReference type="Pfam" id="PF00204">
    <property type="entry name" value="DNA_gyraseB"/>
    <property type="match status" value="1"/>
</dbReference>
<dbReference type="Pfam" id="PF00521">
    <property type="entry name" value="DNA_topoisoIV"/>
    <property type="match status" value="1"/>
</dbReference>
<dbReference type="Pfam" id="PF08070">
    <property type="entry name" value="DTHCT"/>
    <property type="match status" value="1"/>
</dbReference>
<dbReference type="Pfam" id="PF02518">
    <property type="entry name" value="HATPase_c"/>
    <property type="match status" value="1"/>
</dbReference>
<dbReference type="Pfam" id="PF01751">
    <property type="entry name" value="Toprim"/>
    <property type="match status" value="1"/>
</dbReference>
<dbReference type="Pfam" id="PF16898">
    <property type="entry name" value="TOPRIM_C"/>
    <property type="match status" value="1"/>
</dbReference>
<dbReference type="PRINTS" id="PR01158">
    <property type="entry name" value="TOPISMRASEII"/>
</dbReference>
<dbReference type="PRINTS" id="PR00418">
    <property type="entry name" value="TPI2FAMILY"/>
</dbReference>
<dbReference type="SMART" id="SM00433">
    <property type="entry name" value="TOP2c"/>
    <property type="match status" value="1"/>
</dbReference>
<dbReference type="SMART" id="SM00434">
    <property type="entry name" value="TOP4c"/>
    <property type="match status" value="1"/>
</dbReference>
<dbReference type="SUPFAM" id="SSF55874">
    <property type="entry name" value="ATPase domain of HSP90 chaperone/DNA topoisomerase II/histidine kinase"/>
    <property type="match status" value="1"/>
</dbReference>
<dbReference type="SUPFAM" id="SSF54211">
    <property type="entry name" value="Ribosomal protein S5 domain 2-like"/>
    <property type="match status" value="1"/>
</dbReference>
<dbReference type="SUPFAM" id="SSF56719">
    <property type="entry name" value="Type II DNA topoisomerase"/>
    <property type="match status" value="1"/>
</dbReference>
<dbReference type="PROSITE" id="PS52040">
    <property type="entry name" value="TOPO_IIA"/>
    <property type="match status" value="1"/>
</dbReference>
<dbReference type="PROSITE" id="PS00177">
    <property type="entry name" value="TOPOISOMERASE_II"/>
    <property type="match status" value="1"/>
</dbReference>
<dbReference type="PROSITE" id="PS50880">
    <property type="entry name" value="TOPRIM"/>
    <property type="match status" value="1"/>
</dbReference>
<gene>
    <name type="primary">TOP2B</name>
</gene>
<comment type="function">
    <text evidence="6 11 13">Key decatenating enzyme that alters DNA topology by binding to two double-stranded DNA molecules, generating a double-stranded break in one of the strands, passing the intact strand through the broken strand, and religating the broken strand. Plays a role in B-cell differentiation.</text>
</comment>
<comment type="catalytic activity">
    <reaction evidence="3 6">
        <text>ATP-dependent breakage, passage and rejoining of double-stranded DNA.</text>
        <dbReference type="EC" id="5.6.2.2"/>
    </reaction>
</comment>
<comment type="cofactor">
    <cofactor evidence="3 6 9">
        <name>Mg(2+)</name>
        <dbReference type="ChEBI" id="CHEBI:18420"/>
    </cofactor>
    <cofactor evidence="3 6 9">
        <name>Mn(2+)</name>
        <dbReference type="ChEBI" id="CHEBI:29035"/>
    </cofactor>
    <cofactor evidence="3 6 9">
        <name>Ca(2+)</name>
        <dbReference type="ChEBI" id="CHEBI:29108"/>
    </cofactor>
    <text evidence="3 6 9">Binds two Mg(2+) per subunit. The magnesium ions form salt bridges with both the protein and the DNA. Can also accept other divalent metal cations, such as Mn(2+) or Ca(2+).</text>
</comment>
<comment type="subunit">
    <text evidence="2 8 9">Homodimer (PubMed:21778401). Interacts with KIAA1210 (By similarity). Interacts with PLSCR1 (PubMed:19690332).</text>
</comment>
<comment type="interaction">
    <interactant intactId="EBI-2307774">
        <id>Q02880</id>
    </interactant>
    <interactant intactId="EBI-473160">
        <id>Q8N2W9</id>
        <label>PIAS4</label>
    </interactant>
    <organismsDiffer>false</organismsDiffer>
    <experiments>2</experiments>
</comment>
<comment type="subcellular location">
    <subcellularLocation>
        <location evidence="16 17">Nucleus</location>
        <location evidence="16 17">Nucleolus</location>
    </subcellularLocation>
    <subcellularLocation>
        <location evidence="17">Nucleus</location>
        <location evidence="17">Nucleoplasm</location>
    </subcellularLocation>
    <subcellularLocation>
        <location evidence="8">Nucleus</location>
    </subcellularLocation>
</comment>
<comment type="alternative products">
    <event type="alternative splicing"/>
    <isoform>
        <id>Q02880-1</id>
        <name>Beta-2</name>
        <sequence type="displayed"/>
    </isoform>
    <isoform>
        <id>Q02880-2</id>
        <name>Beta-1</name>
        <sequence type="described" ref="VSP_006532"/>
    </isoform>
</comment>
<comment type="tissue specificity">
    <text evidence="17">Expressed in the tonsil, spleen, lymph node, thymus, skin, pancreas, testis, colon, kidney, liver, brain and lung (PubMed:9155056). Also found in breast, colon and lung carcinomas, Hodgkin's disease, large-cell non-Hodgkin's lymphoma, lymphocytic lymphomas and seminomas (PubMed:9155056).</text>
</comment>
<comment type="PTM">
    <text evidence="15">(Microbial infection) Deubiquitinated by Epstein-Barr virus BPLF1; leading to stabilized SUMOylated TOP2A trapped in cleavage complexes, which halts the DNA damage response to TOP2A-induced double-strand DNA breaks.</text>
</comment>
<comment type="PTM">
    <text evidence="15">SUMOylated.</text>
</comment>
<comment type="disease">
    <text evidence="10 12">Defects in TOP2B may be involved in global developmental delay with autism spectrum disorder (ASD).</text>
</comment>
<comment type="disease" evidence="11 13 14">
    <disease id="DI-06278">
        <name>B-cell immunodeficiency, distal limb anomalies, and urogenital malformations</name>
        <acronym>BILU</acronym>
        <description>An autosomal dominant disorder characterized by humoral immunodeficiency with undetectable B cells, distal limb anomalies, dysmorphic facial features, and urogenital malformations.</description>
        <dbReference type="MIM" id="609296"/>
    </disease>
    <text>The disease is caused by variants affecting the gene represented in this entry.</text>
</comment>
<comment type="miscellaneous">
    <text>Eukaryotic topoisomerase I and II can relax both negative and positive supercoils, whereas prokaryotic enzymes relax only negative supercoils.</text>
</comment>
<comment type="similarity">
    <text evidence="18">Belongs to the type II topoisomerase family.</text>
</comment>
<evidence type="ECO:0000250" key="1"/>
<evidence type="ECO:0000250" key="2">
    <source>
        <dbReference type="UniProtKB" id="Q64511"/>
    </source>
</evidence>
<evidence type="ECO:0000255" key="3">
    <source>
        <dbReference type="PROSITE-ProRule" id="PRU00995"/>
    </source>
</evidence>
<evidence type="ECO:0000255" key="4">
    <source>
        <dbReference type="PROSITE-ProRule" id="PRU01384"/>
    </source>
</evidence>
<evidence type="ECO:0000256" key="5">
    <source>
        <dbReference type="SAM" id="MobiDB-lite"/>
    </source>
</evidence>
<evidence type="ECO:0000269" key="6">
    <source>
    </source>
</evidence>
<evidence type="ECO:0000269" key="7">
    <source>
    </source>
</evidence>
<evidence type="ECO:0000269" key="8">
    <source>
    </source>
</evidence>
<evidence type="ECO:0000269" key="9">
    <source>
    </source>
</evidence>
<evidence type="ECO:0000269" key="10">
    <source>
    </source>
</evidence>
<evidence type="ECO:0000269" key="11">
    <source>
    </source>
</evidence>
<evidence type="ECO:0000269" key="12">
    <source>
    </source>
</evidence>
<evidence type="ECO:0000269" key="13">
    <source>
    </source>
</evidence>
<evidence type="ECO:0000269" key="14">
    <source>
    </source>
</evidence>
<evidence type="ECO:0000269" key="15">
    <source>
    </source>
</evidence>
<evidence type="ECO:0000269" key="16">
    <source>
    </source>
</evidence>
<evidence type="ECO:0000269" key="17">
    <source>
    </source>
</evidence>
<evidence type="ECO:0000305" key="18"/>
<evidence type="ECO:0007744" key="19">
    <source>
    </source>
</evidence>
<evidence type="ECO:0007744" key="20">
    <source>
    </source>
</evidence>
<evidence type="ECO:0007744" key="21">
    <source>
    </source>
</evidence>
<evidence type="ECO:0007744" key="22">
    <source>
    </source>
</evidence>
<evidence type="ECO:0007744" key="23">
    <source>
    </source>
</evidence>
<evidence type="ECO:0007744" key="24">
    <source>
    </source>
</evidence>
<evidence type="ECO:0007744" key="25">
    <source>
    </source>
</evidence>
<evidence type="ECO:0007744" key="26">
    <source>
    </source>
</evidence>
<evidence type="ECO:0007744" key="27">
    <source>
    </source>
</evidence>
<evidence type="ECO:0007744" key="28">
    <source>
    </source>
</evidence>
<evidence type="ECO:0007744" key="29">
    <source>
    </source>
</evidence>
<evidence type="ECO:0007744" key="30">
    <source>
    </source>
</evidence>
<evidence type="ECO:0007744" key="31">
    <source>
    </source>
</evidence>
<evidence type="ECO:0007829" key="32">
    <source>
        <dbReference type="PDB" id="3QX3"/>
    </source>
</evidence>
<evidence type="ECO:0007829" key="33">
    <source>
        <dbReference type="PDB" id="4G0U"/>
    </source>
</evidence>
<evidence type="ECO:0007829" key="34">
    <source>
        <dbReference type="PDB" id="4G0V"/>
    </source>
</evidence>
<evidence type="ECO:0007829" key="35">
    <source>
        <dbReference type="PDB" id="4J3N"/>
    </source>
</evidence>
<evidence type="ECO:0007829" key="36">
    <source>
        <dbReference type="PDB" id="5GWJ"/>
    </source>
</evidence>
<evidence type="ECO:0007829" key="37">
    <source>
        <dbReference type="PDB" id="5ZAD"/>
    </source>
</evidence>
<evidence type="ECO:0007829" key="38">
    <source>
        <dbReference type="PDB" id="7QFN"/>
    </source>
</evidence>
<evidence type="ECO:0007829" key="39">
    <source>
        <dbReference type="PDB" id="7QFO"/>
    </source>
</evidence>
<evidence type="ECO:0007829" key="40">
    <source>
        <dbReference type="PDB" id="7ZBG"/>
    </source>
</evidence>
<evidence type="ECO:0007829" key="41">
    <source>
        <dbReference type="PDB" id="8KE7"/>
    </source>
</evidence>
<reference key="1">
    <citation type="journal article" date="1992" name="Nucleic Acids Res.">
        <title>Isolation of cDNA clones encoding the beta isozyme of human DNA topoisomerase II and localisation of the gene to chromosome 3p24.</title>
        <authorList>
            <person name="Jenkins J.R."/>
            <person name="Ayton P."/>
            <person name="Jones T."/>
            <person name="Davies S.L."/>
            <person name="Simmons D.L."/>
            <person name="Harris A.L."/>
            <person name="Sheer D."/>
            <person name="Hickson I.D."/>
        </authorList>
    </citation>
    <scope>NUCLEOTIDE SEQUENCE [MRNA]</scope>
</reference>
<reference key="2">
    <citation type="journal article" date="1993" name="Biochim. Biophys. Acta">
        <title>Novel HeLa topoisomerase II is the II beta isoform: complete coding sequence and homology with other type II topoisomerases.</title>
        <authorList>
            <person name="Austin C.A."/>
            <person name="Sng J.H."/>
            <person name="Patel S."/>
            <person name="Fisher L.M."/>
        </authorList>
    </citation>
    <scope>NUCLEOTIDE SEQUENCE [MRNA]</scope>
</reference>
<reference key="3">
    <citation type="journal article" date="1989" name="Proc. Natl. Acad. Sci. U.S.A.">
        <title>Characterization and immunological identification of cDNA clones encoding two human DNA topoisomerase II isozymes.</title>
        <authorList>
            <person name="Chung T.D."/>
            <person name="Drake F.H."/>
            <person name="Tan K.B."/>
            <person name="Per S.R."/>
            <person name="Crooke S.T."/>
            <person name="Mirabelli C.K."/>
        </authorList>
    </citation>
    <scope>NUCLEOTIDE SEQUENCE [MRNA] OF 149-1034</scope>
</reference>
<reference key="4">
    <citation type="journal article" date="1999" name="Biochim. Biophys. Acta">
        <title>Molecular cloning and characterization of the human topoisomerase IIalpha and IIbeta genes: evidence for isoform evolution through gene duplication.</title>
        <authorList>
            <person name="Sng J.H."/>
            <person name="Heaton V.J."/>
            <person name="Bell M."/>
            <person name="Mani P."/>
            <person name="Austin C.A."/>
            <person name="Fisher L.M."/>
        </authorList>
    </citation>
    <scope>NUCLEOTIDE SEQUENCE [GENOMIC DNA] OF 910-1626</scope>
</reference>
<reference key="5">
    <citation type="journal article" date="1990" name="FEBS Lett.">
        <title>Isolation and characterization of a human cDNA clone encoding a novel DNA topoisomerase II homologue from HeLa cells.</title>
        <authorList>
            <person name="Austin C.A."/>
            <person name="Fisher L.M."/>
        </authorList>
    </citation>
    <scope>NUCLEOTIDE SEQUENCE OF 1038-1271</scope>
</reference>
<reference key="6">
    <citation type="journal article" date="1997" name="Biochem. Biophys. Res. Commun.">
        <title>Binding of wild-type p53 by topoisomerase II and overexpression of topoisomerase II in human hepatocellular carcinoma.</title>
        <authorList>
            <person name="Yuwen H."/>
            <person name="Hsia C.C."/>
            <person name="Nakashima Y."/>
            <person name="Evangelista A."/>
            <person name="Tabor E."/>
        </authorList>
    </citation>
    <scope>NUCLEOTIDE SEQUENCE OF 1277-1626</scope>
</reference>
<reference key="7">
    <citation type="journal article" date="1993" name="Nucleic Acids Res.">
        <title>Human cells express two differentially spliced forms of topoisomerase II beta mRNA.</title>
        <authorList>
            <person name="Davies S.L."/>
            <person name="Jenkins J.R."/>
            <person name="Hickson I.D."/>
        </authorList>
    </citation>
    <scope>ALTERNATIVE SPLICING</scope>
</reference>
<reference key="8">
    <citation type="journal article" date="1994" name="Exp. Cell Res.">
        <title>Discrete localization of different DNA topoisomerases in HeLa and K562 cell nuclei and subnuclear fractions.</title>
        <authorList>
            <person name="Zini N."/>
            <person name="Santi S."/>
            <person name="Ognibene A."/>
            <person name="Bavelloni A."/>
            <person name="Neri L.M."/>
            <person name="Valmori A."/>
            <person name="Mariani E."/>
            <person name="Negri C."/>
            <person name="Astaldi-Ricotti G.C."/>
            <person name="Maraldi N.M."/>
        </authorList>
    </citation>
    <scope>SUBCELLULAR LOCATION</scope>
</reference>
<reference key="9">
    <citation type="journal article" date="1997" name="Br. J. Cancer">
        <title>The distribution and expression of the two isoforms of DNA topoisomerase II in normal and neoplastic human tissues.</title>
        <authorList>
            <person name="Turley H."/>
            <person name="Comley M."/>
            <person name="Houlbrook S."/>
            <person name="Nozaki N."/>
            <person name="Kikuchi A."/>
            <person name="Hickson I.D."/>
            <person name="Gatter K."/>
            <person name="Harris A.L."/>
        </authorList>
    </citation>
    <scope>SUBCELLULAR LOCATION</scope>
    <scope>TISSUE SPECIFICITY</scope>
</reference>
<reference key="10">
    <citation type="journal article" date="2000" name="Biochemistry">
        <title>Mutagenesis of E477 or K505 in the B' domain of human topoisomerase II beta increases the requirement for magnesium ions during strand passage.</title>
        <authorList>
            <person name="West K.L."/>
            <person name="Meczes E.L."/>
            <person name="Thorn R."/>
            <person name="Turnbull R.M."/>
            <person name="Marshall R."/>
            <person name="Austin C.A."/>
        </authorList>
    </citation>
    <scope>COFACTOR</scope>
    <scope>FUNCTION</scope>
    <scope>CATALYTIC ACTIVITY</scope>
    <scope>MUTAGENESIS OF GLU-482; SER-485; ARG-508; LYS-510 AND ARG-515</scope>
</reference>
<reference key="11">
    <citation type="journal article" date="2003" name="Biochem. Biophys. Res. Commun.">
        <title>Identification of functional nuclear export sequences in human topoisomerase IIalpha and beta.</title>
        <authorList>
            <person name="Mirski S.E."/>
            <person name="Bielawski J.C."/>
            <person name="Cole S.P."/>
        </authorList>
    </citation>
    <scope>NUCLEAR EXPORT SIGNAL</scope>
</reference>
<reference key="12">
    <citation type="journal article" date="2006" name="Cell">
        <title>Global, in vivo, and site-specific phosphorylation dynamics in signaling networks.</title>
        <authorList>
            <person name="Olsen J.V."/>
            <person name="Blagoev B."/>
            <person name="Gnad F."/>
            <person name="Macek B."/>
            <person name="Kumar C."/>
            <person name="Mortensen P."/>
            <person name="Mann M."/>
        </authorList>
    </citation>
    <scope>PHOSPHORYLATION [LARGE SCALE ANALYSIS] AT SER-1336; SER-1340; SER-1400 AND SER-1413</scope>
    <scope>IDENTIFICATION BY MASS SPECTROMETRY [LARGE SCALE ANALYSIS]</scope>
    <source>
        <tissue>Cervix carcinoma</tissue>
    </source>
</reference>
<reference key="13">
    <citation type="journal article" date="2006" name="Nat. Biotechnol.">
        <title>A probability-based approach for high-throughput protein phosphorylation analysis and site localization.</title>
        <authorList>
            <person name="Beausoleil S.A."/>
            <person name="Villen J."/>
            <person name="Gerber S.A."/>
            <person name="Rush J."/>
            <person name="Gygi S.P."/>
        </authorList>
    </citation>
    <scope>IDENTIFICATION BY MASS SPECTROMETRY [LARGE SCALE ANALYSIS]</scope>
    <source>
        <tissue>Cervix carcinoma</tissue>
    </source>
</reference>
<reference key="14">
    <citation type="journal article" date="2007" name="Electrophoresis">
        <title>Toward a global characterization of the phosphoproteome in prostate cancer cells: identification of phosphoproteins in the LNCaP cell line.</title>
        <authorList>
            <person name="Giorgianni F."/>
            <person name="Zhao Y."/>
            <person name="Desiderio D.M."/>
            <person name="Beranova-Giorgianni S."/>
        </authorList>
    </citation>
    <scope>IDENTIFICATION BY MASS SPECTROMETRY [LARGE SCALE ANALYSIS]</scope>
    <source>
        <tissue>Prostate cancer</tissue>
    </source>
</reference>
<reference key="15">
    <citation type="journal article" date="2007" name="Nucleic Acids Res.">
        <title>Nuclear interactions of topoisomerase II alpha and beta with phospholipid scramblase 1.</title>
        <authorList>
            <person name="Wyles J.P."/>
            <person name="Wu Z."/>
            <person name="Mirski S.E."/>
            <person name="Cole S.P."/>
        </authorList>
    </citation>
    <scope>SUBCELLULAR LOCATION</scope>
    <scope>INTERACTION WITH PLSCR1</scope>
</reference>
<reference key="16">
    <citation type="journal article" date="2007" name="Science">
        <title>ATM and ATR substrate analysis reveals extensive protein networks responsive to DNA damage.</title>
        <authorList>
            <person name="Matsuoka S."/>
            <person name="Ballif B.A."/>
            <person name="Smogorzewska A."/>
            <person name="McDonald E.R. III"/>
            <person name="Hurov K.E."/>
            <person name="Luo J."/>
            <person name="Bakalarski C.E."/>
            <person name="Zhao Z."/>
            <person name="Solimini N."/>
            <person name="Lerenthal Y."/>
            <person name="Shiloh Y."/>
            <person name="Gygi S.P."/>
            <person name="Elledge S.J."/>
        </authorList>
    </citation>
    <scope>PHOSPHORYLATION [LARGE SCALE ANALYSIS] AT SER-1454</scope>
    <scope>IDENTIFICATION BY MASS SPECTROMETRY [LARGE SCALE ANALYSIS]</scope>
    <source>
        <tissue>Embryonic kidney</tissue>
    </source>
</reference>
<reference key="17">
    <citation type="journal article" date="2008" name="J. Proteome Res.">
        <title>Combining protein-based IMAC, peptide-based IMAC, and MudPIT for efficient phosphoproteomic analysis.</title>
        <authorList>
            <person name="Cantin G.T."/>
            <person name="Yi W."/>
            <person name="Lu B."/>
            <person name="Park S.K."/>
            <person name="Xu T."/>
            <person name="Lee J.-D."/>
            <person name="Yates J.R. III"/>
        </authorList>
    </citation>
    <scope>PHOSPHORYLATION [LARGE SCALE ANALYSIS] AT SER-1400; SER-1413 AND SER-1581</scope>
    <scope>IDENTIFICATION BY MASS SPECTROMETRY [LARGE SCALE ANALYSIS]</scope>
    <source>
        <tissue>Cervix carcinoma</tissue>
    </source>
</reference>
<reference key="18">
    <citation type="journal article" date="2008" name="J. Proteome Res.">
        <title>Phosphorylation analysis of primary human T lymphocytes using sequential IMAC and titanium oxide enrichment.</title>
        <authorList>
            <person name="Carrascal M."/>
            <person name="Ovelleiro D."/>
            <person name="Casas V."/>
            <person name="Gay M."/>
            <person name="Abian J."/>
        </authorList>
    </citation>
    <scope>IDENTIFICATION BY MASS SPECTROMETRY [LARGE SCALE ANALYSIS]</scope>
    <source>
        <tissue>T-cell</tissue>
    </source>
</reference>
<reference key="19">
    <citation type="journal article" date="2008" name="Proc. Natl. Acad. Sci. U.S.A.">
        <title>A quantitative atlas of mitotic phosphorylation.</title>
        <authorList>
            <person name="Dephoure N."/>
            <person name="Zhou C."/>
            <person name="Villen J."/>
            <person name="Beausoleil S.A."/>
            <person name="Bakalarski C.E."/>
            <person name="Elledge S.J."/>
            <person name="Gygi S.P."/>
        </authorList>
    </citation>
    <scope>PHOSPHORYLATION [LARGE SCALE ANALYSIS] AT SER-1336; SER-1340; SER-1342; SER-1344; SER-1375; SER-1400; SER-1413; TYR-1421; SER-1424; SER-1466; SER-1550; SER-1552; SER-1581; THR-1592; SER-1596; TYR-1609 AND SER-1613</scope>
    <scope>IDENTIFICATION BY MASS SPECTROMETRY [LARGE SCALE ANALYSIS]</scope>
    <source>
        <tissue>Cervix carcinoma</tissue>
    </source>
</reference>
<reference key="20">
    <citation type="journal article" date="2009" name="Anal. Chem.">
        <title>Lys-N and trypsin cover complementary parts of the phosphoproteome in a refined SCX-based approach.</title>
        <authorList>
            <person name="Gauci S."/>
            <person name="Helbig A.O."/>
            <person name="Slijper M."/>
            <person name="Krijgsveld J."/>
            <person name="Heck A.J."/>
            <person name="Mohammed S."/>
        </authorList>
    </citation>
    <scope>IDENTIFICATION BY MASS SPECTROMETRY [LARGE SCALE ANALYSIS]</scope>
</reference>
<reference key="21">
    <citation type="journal article" date="2009" name="Sci. Signal.">
        <title>Quantitative phosphoproteomic analysis of T cell receptor signaling reveals system-wide modulation of protein-protein interactions.</title>
        <authorList>
            <person name="Mayya V."/>
            <person name="Lundgren D.H."/>
            <person name="Hwang S.-I."/>
            <person name="Rezaul K."/>
            <person name="Wu L."/>
            <person name="Eng J.K."/>
            <person name="Rodionov V."/>
            <person name="Han D.K."/>
        </authorList>
    </citation>
    <scope>PHOSPHORYLATION [LARGE SCALE ANALYSIS] AT SER-1236; THR-1292; SER-1342; SER-1344; SER-1375; SER-1400; THR-1403; SER-1413; SER-1424; SER-1461; SER-1466; SER-1473; SER-1476; SER-1522; SER-1524; THR-1575 AND SER-1581</scope>
    <scope>IDENTIFICATION BY MASS SPECTROMETRY [LARGE SCALE ANALYSIS]</scope>
    <source>
        <tissue>Leukemic T-cell</tissue>
    </source>
</reference>
<reference key="22">
    <citation type="journal article" date="2010" name="Sci. Signal.">
        <title>Quantitative phosphoproteomics reveals widespread full phosphorylation site occupancy during mitosis.</title>
        <authorList>
            <person name="Olsen J.V."/>
            <person name="Vermeulen M."/>
            <person name="Santamaria A."/>
            <person name="Kumar C."/>
            <person name="Miller M.L."/>
            <person name="Jensen L.J."/>
            <person name="Gnad F."/>
            <person name="Cox J."/>
            <person name="Jensen T.S."/>
            <person name="Nigg E.A."/>
            <person name="Brunak S."/>
            <person name="Mann M."/>
        </authorList>
    </citation>
    <scope>PHOSPHORYLATION [LARGE SCALE ANALYSIS] AT SER-1236; SER-1336; SER-1340; SER-1342; SER-1344; SER-1400; SER-1413; SER-1424; SER-1441; SER-1452; SER-1454; SER-1466; SER-1476; SER-1522; SER-1524; SER-1526 AND SER-1613</scope>
    <scope>IDENTIFICATION BY MASS SPECTROMETRY [LARGE SCALE ANALYSIS]</scope>
    <source>
        <tissue>Cervix carcinoma</tissue>
    </source>
</reference>
<reference key="23">
    <citation type="journal article" date="2011" name="BMC Syst. Biol.">
        <title>Initial characterization of the human central proteome.</title>
        <authorList>
            <person name="Burkard T.R."/>
            <person name="Planyavsky M."/>
            <person name="Kaupe I."/>
            <person name="Breitwieser F.P."/>
            <person name="Buerckstuemmer T."/>
            <person name="Bennett K.L."/>
            <person name="Superti-Furga G."/>
            <person name="Colinge J."/>
        </authorList>
    </citation>
    <scope>IDENTIFICATION BY MASS SPECTROMETRY [LARGE SCALE ANALYSIS]</scope>
</reference>
<reference key="24">
    <citation type="journal article" date="2011" name="Sci. Signal.">
        <title>System-wide temporal characterization of the proteome and phosphoproteome of human embryonic stem cell differentiation.</title>
        <authorList>
            <person name="Rigbolt K.T."/>
            <person name="Prokhorova T.A."/>
            <person name="Akimov V."/>
            <person name="Henningsen J."/>
            <person name="Johansen P.T."/>
            <person name="Kratchmarova I."/>
            <person name="Kassem M."/>
            <person name="Mann M."/>
            <person name="Olsen J.V."/>
            <person name="Blagoev B."/>
        </authorList>
    </citation>
    <scope>PHOSPHORYLATION [LARGE SCALE ANALYSIS] AT SER-1336; SER-1340; SER-1342; SER-1344; SER-1358; SER-1400; SER-1413; SER-1424; SER-1441; SER-1454; SER-1466; SER-1522; SER-1524; SER-1550; SER-1581 AND SER-1613</scope>
    <scope>IDENTIFICATION BY MASS SPECTROMETRY [LARGE SCALE ANALYSIS]</scope>
</reference>
<reference key="25">
    <citation type="journal article" date="2013" name="J. Proteome Res.">
        <title>Toward a comprehensive characterization of a human cancer cell phosphoproteome.</title>
        <authorList>
            <person name="Zhou H."/>
            <person name="Di Palma S."/>
            <person name="Preisinger C."/>
            <person name="Peng M."/>
            <person name="Polat A.N."/>
            <person name="Heck A.J."/>
            <person name="Mohammed S."/>
        </authorList>
    </citation>
    <scope>PHOSPHORYLATION [LARGE SCALE ANALYSIS] AT SER-1236; SER-1400; SER-1413; SER-1424; SER-1452; SER-1454; SER-1466; SER-1522; SER-1524; SER-1550 AND SER-1552</scope>
    <scope>IDENTIFICATION BY MASS SPECTROMETRY [LARGE SCALE ANALYSIS]</scope>
    <source>
        <tissue>Cervix carcinoma</tissue>
        <tissue>Erythroleukemia</tissue>
    </source>
</reference>
<reference key="26">
    <citation type="journal article" date="2014" name="J. Proteomics">
        <title>An enzyme assisted RP-RPLC approach for in-depth analysis of human liver phosphoproteome.</title>
        <authorList>
            <person name="Bian Y."/>
            <person name="Song C."/>
            <person name="Cheng K."/>
            <person name="Dong M."/>
            <person name="Wang F."/>
            <person name="Huang J."/>
            <person name="Sun D."/>
            <person name="Wang L."/>
            <person name="Ye M."/>
            <person name="Zou H."/>
        </authorList>
    </citation>
    <scope>PHOSPHORYLATION [LARGE SCALE ANALYSIS] AT SER-1400; SER-1413; SER-1522; SER-1524; SER-1550; SER-1552; THR-1575; SER-1576 AND SER-1581</scope>
    <scope>IDENTIFICATION BY MASS SPECTROMETRY [LARGE SCALE ANALYSIS]</scope>
    <source>
        <tissue>Liver</tissue>
    </source>
</reference>
<reference key="27">
    <citation type="journal article" date="2014" name="Nat. Struct. Mol. Biol.">
        <title>Uncovering global SUMOylation signaling networks in a site-specific manner.</title>
        <authorList>
            <person name="Hendriks I.A."/>
            <person name="D'Souza R.C."/>
            <person name="Yang B."/>
            <person name="Verlaan-de Vries M."/>
            <person name="Mann M."/>
            <person name="Vertegaal A.C."/>
        </authorList>
    </citation>
    <scope>SUMOYLATION [LARGE SCALE ANALYSIS] AT LYS-34; LYS-1227; LYS-1271; LYS-1440 AND LYS-1456</scope>
    <scope>SUMOYLATION [LARGE SCALE ANALYSIS] AT LYS-28 (ISOFORM BETA-1)</scope>
    <scope>IDENTIFICATION BY MASS SPECTROMETRY [LARGE SCALE ANALYSIS]</scope>
</reference>
<reference key="28">
    <citation type="journal article" date="2015" name="Cell Rep.">
        <title>SUMO-2 orchestrates chromatin modifiers in response to DNA damage.</title>
        <authorList>
            <person name="Hendriks I.A."/>
            <person name="Treffers L.W."/>
            <person name="Verlaan-de Vries M."/>
            <person name="Olsen J.V."/>
            <person name="Vertegaal A.C."/>
        </authorList>
    </citation>
    <scope>SUMOYLATION [LARGE SCALE ANALYSIS] AT LYS-177; LYS-373; LYS-437; LYS-605; LYS-643; LYS-1227; LYS-1440 AND LYS-1456</scope>
    <scope>SUMOYLATION [LARGE SCALE ANALYSIS] AT LYS-28 (ISOFORM BETA-1)</scope>
    <scope>IDENTIFICATION BY MASS SPECTROMETRY [LARGE SCALE ANALYSIS]</scope>
</reference>
<reference key="29">
    <citation type="journal article" date="2015" name="Mol. Cell. Proteomics">
        <title>System-wide analysis of SUMOylation dynamics in response to replication stress reveals novel small ubiquitin-like modified target proteins and acceptor lysines relevant for genome stability.</title>
        <authorList>
            <person name="Xiao Z."/>
            <person name="Chang J.G."/>
            <person name="Hendriks I.A."/>
            <person name="Sigurdsson J.O."/>
            <person name="Olsen J.V."/>
            <person name="Vertegaal A.C."/>
        </authorList>
    </citation>
    <scope>SUMOYLATION [LARGE SCALE ANALYSIS] AT LYS-1250</scope>
    <scope>IDENTIFICATION BY MASS SPECTROMETRY [LARGE SCALE ANALYSIS]</scope>
</reference>
<reference key="30">
    <citation type="journal article" date="2017" name="Nat. Struct. Mol. Biol.">
        <title>Site-specific mapping of the human SUMO proteome reveals co-modification with phosphorylation.</title>
        <authorList>
            <person name="Hendriks I.A."/>
            <person name="Lyon D."/>
            <person name="Young C."/>
            <person name="Jensen L.J."/>
            <person name="Vertegaal A.C."/>
            <person name="Nielsen M.L."/>
        </authorList>
    </citation>
    <scope>SUMOYLATION [LARGE SCALE ANALYSIS] AT LYS-33; LYS-177; LYS-178; LYS-228; LYS-299; LYS-367; LYS-373; LYS-437; LYS-439; LYS-446; LYS-600; LYS-605; LYS-635; LYS-643; LYS-646; LYS-676; LYS-712; LYS-1092; LYS-1214; LYS-1217; LYS-1226; LYS-1227; LYS-1250; LYS-1262; LYS-1271; LYS-1323; LYS-1327; LYS-1398; LYS-1440; LYS-1456 AND LYS-1490</scope>
    <scope>SUMOYLATION [LARGE SCALE ANALYSIS] AT LYS-28 AND LYS-29 (ISOFORM BETA-1)</scope>
    <scope>IDENTIFICATION BY MASS SPECTROMETRY [LARGE SCALE ANALYSIS]</scope>
</reference>
<reference key="31">
    <citation type="journal article" date="2019" name="Nat. Commun.">
        <title>Mutations in topoisomerase IIbeta result in a B cell immunodeficiency.</title>
        <authorList>
            <person name="Broderick L."/>
            <person name="Yost S."/>
            <person name="Li D."/>
            <person name="McGeough M.D."/>
            <person name="Booshehri L.M."/>
            <person name="Guaderrama M."/>
            <person name="Brydges S.D."/>
            <person name="Kucharova K."/>
            <person name="Patel N.C."/>
            <person name="Harr M."/>
            <person name="Hakonarson H."/>
            <person name="Zackai E."/>
            <person name="Cowell I.G."/>
            <person name="Austin C.A."/>
            <person name="Huegle B."/>
            <person name="Gebauer C."/>
            <person name="Zhang J."/>
            <person name="Xu X."/>
            <person name="Wang J."/>
            <person name="Croker B.A."/>
            <person name="Frazer K.A."/>
            <person name="Putnam C.D."/>
            <person name="Hoffman H.M."/>
        </authorList>
    </citation>
    <scope>INVOLVEMENT IN BILU</scope>
    <scope>VARIANTS BILU LEU-488; GLU-593 DEL AND SER-638</scope>
    <scope>CHARACTERIZATION OF VARIANTS BILU LEU-488; GLU-593 DEL AND SER-638</scope>
    <scope>FUNCTION</scope>
</reference>
<reference key="32">
    <citation type="journal article" date="2021" name="PLoS Pathog.">
        <title>The Epstein-Barr virus deubiquitinating enzyme BPLF1 regulates the activity of topoisomerase II during productive infection.</title>
        <authorList>
            <person name="Li J."/>
            <person name="Nagy N."/>
            <person name="Liu J."/>
            <person name="Gupta S."/>
            <person name="Frisan T."/>
            <person name="Hennig T."/>
            <person name="Cameron D.P."/>
            <person name="Baranello L."/>
            <person name="Masucci M.G."/>
        </authorList>
    </citation>
    <scope>DEUBIQUITINATION BY EPSTEIN-BARR VIRUS PROTEIN BPLF1 (MICROBIAL INFECTION)</scope>
    <scope>SUMOYLATION</scope>
</reference>
<reference key="33">
    <citation type="journal article" date="2011" name="Science">
        <title>Structural basis of type II topoisomerase inhibition by the anticancer drug etoposide.</title>
        <authorList>
            <person name="Wu C.C."/>
            <person name="Li T.K."/>
            <person name="Farh L."/>
            <person name="Lin L.Y."/>
            <person name="Lin T.S."/>
            <person name="Yu Y.J."/>
            <person name="Yen T.J."/>
            <person name="Chiang C.W."/>
            <person name="Chan N.L."/>
        </authorList>
    </citation>
    <scope>X-RAY CRYSTALLOGRAPHY (2.16 ANGSTROMS) OF 450-1206 IN COMPLEX WITH DNA; MAGNESIUM AND ETOPOSIDE</scope>
    <scope>ACTIVE SITE</scope>
    <scope>COFACTOR</scope>
    <scope>SUBUNIT</scope>
</reference>
<reference key="34">
    <citation type="journal article" date="2017" name="Clin. Chim. Acta">
        <title>Global developmental delay and intellectual disability associated with a de novo TOP2B mutation.</title>
        <authorList>
            <person name="Lam C.W."/>
            <person name="Yeung W.L."/>
            <person name="Law C.Y."/>
        </authorList>
    </citation>
    <scope>VARIANT TYR-63</scope>
    <scope>INVOLVEMENT IN DEVELOPMENTAL DELAY AND AUTISM SPECTRUM DISORDER</scope>
</reference>
<reference key="35">
    <citation type="journal article" date="2020" name="Blood">
        <title>Topoisomerase 2beta mutation impairs early B-cell development.</title>
        <authorList>
            <person name="Papapietro O."/>
            <person name="Chandra A."/>
            <person name="Eletto D."/>
            <person name="Inglott S."/>
            <person name="Plagnol V."/>
            <person name="Curtis J."/>
            <person name="Maes M."/>
            <person name="Alisaac A."/>
            <person name="Albuquerque A.S."/>
            <person name="Basseres E."/>
            <person name="Hermine O."/>
            <person name="Picard C."/>
            <person name="Fischer A."/>
            <person name="Durandy A."/>
            <person name="Kracker S."/>
            <person name="Burns S.O."/>
            <person name="Cuchet-Lourenco D."/>
            <person name="Okkenhaug K."/>
            <person name="Nejentsev S."/>
        </authorList>
    </citation>
    <scope>VARIANT BILU PRO-490</scope>
    <scope>CHARACTERIZATION OF VARIANT BILU PRO-490</scope>
    <scope>FUNCTION</scope>
</reference>
<reference key="36">
    <citation type="journal article" date="2020" name="Mol. Genet. Genomic Med.">
        <title>A de novo TOP2B variant associated with global developmental delay and autism spectrum disorder.</title>
        <authorList>
            <person name="Hiraide T."/>
            <person name="Watanabe S."/>
            <person name="Matsubayashi T."/>
            <person name="Yanagi K."/>
            <person name="Nakashima M."/>
            <person name="Ogata T."/>
            <person name="Saitsu H."/>
        </authorList>
    </citation>
    <scope>VARIANT TYR-63</scope>
    <scope>INVOLVEMENT IN DEVELOPMENTAL DELAY AND AUTISM SPECTRUM DISORDER</scope>
</reference>
<reference key="37">
    <citation type="journal article" date="2021" name="J. Clin. Immunol.">
        <title>Inherited TOP2B Mutation: Possible Confirmation of Mutational Hotspots in the TOPRIM Domain.</title>
        <authorList>
            <person name="Erdos M."/>
            <person name="Lanyi A."/>
            <person name="Balazs G."/>
            <person name="Casanova J.L."/>
            <person name="Boisson B."/>
            <person name="Marodi L."/>
        </authorList>
    </citation>
    <scope>VARIANT BILU GLU-593 DEL</scope>
</reference>
<feature type="initiator methionine" description="Removed" evidence="2">
    <location>
        <position position="1"/>
    </location>
</feature>
<feature type="chain" id="PRO_0000145369" description="DNA topoisomerase 2-beta">
    <location>
        <begin position="2"/>
        <end position="1626"/>
    </location>
</feature>
<feature type="domain" description="Toprim" evidence="3">
    <location>
        <begin position="476"/>
        <end position="593"/>
    </location>
</feature>
<feature type="domain" description="Topo IIA-type catalytic" evidence="4">
    <location>
        <begin position="736"/>
        <end position="1189"/>
    </location>
</feature>
<feature type="region of interest" description="Interaction with DNA" evidence="1">
    <location>
        <begin position="363"/>
        <end position="365"/>
    </location>
</feature>
<feature type="region of interest" description="Interaction with DNA">
    <location>
        <begin position="1011"/>
        <end position="1020"/>
    </location>
</feature>
<feature type="region of interest" description="Disordered" evidence="5">
    <location>
        <begin position="1110"/>
        <end position="1140"/>
    </location>
</feature>
<feature type="region of interest" description="Disordered" evidence="5">
    <location>
        <begin position="1274"/>
        <end position="1604"/>
    </location>
</feature>
<feature type="region of interest" description="Interaction with PLSCR1" evidence="7">
    <location>
        <begin position="1506"/>
        <end position="1512"/>
    </location>
</feature>
<feature type="short sequence motif" description="Nuclear export signal">
    <location>
        <begin position="1034"/>
        <end position="1044"/>
    </location>
</feature>
<feature type="compositionally biased region" description="Basic and acidic residues" evidence="5">
    <location>
        <begin position="1334"/>
        <end position="1344"/>
    </location>
</feature>
<feature type="compositionally biased region" description="Basic and acidic residues" evidence="5">
    <location>
        <begin position="1358"/>
        <end position="1370"/>
    </location>
</feature>
<feature type="compositionally biased region" description="Acidic residues" evidence="5">
    <location>
        <begin position="1374"/>
        <end position="1392"/>
    </location>
</feature>
<feature type="compositionally biased region" description="Basic and acidic residues" evidence="5">
    <location>
        <begin position="1430"/>
        <end position="1442"/>
    </location>
</feature>
<feature type="compositionally biased region" description="Basic and acidic residues" evidence="5">
    <location>
        <begin position="1456"/>
        <end position="1466"/>
    </location>
</feature>
<feature type="compositionally biased region" description="Basic residues" evidence="5">
    <location>
        <begin position="1539"/>
        <end position="1549"/>
    </location>
</feature>
<feature type="compositionally biased region" description="Basic residues" evidence="5">
    <location>
        <begin position="1563"/>
        <end position="1574"/>
    </location>
</feature>
<feature type="active site" description="O-(5'-phospho-DNA)-tyrosine intermediate" evidence="4 9">
    <location>
        <position position="826"/>
    </location>
</feature>
<feature type="binding site" evidence="1">
    <location>
        <position position="112"/>
    </location>
    <ligand>
        <name>ATP</name>
        <dbReference type="ChEBI" id="CHEBI:30616"/>
    </ligand>
</feature>
<feature type="binding site" evidence="1">
    <location>
        <position position="141"/>
    </location>
    <ligand>
        <name>ATP</name>
        <dbReference type="ChEBI" id="CHEBI:30616"/>
    </ligand>
</feature>
<feature type="binding site" evidence="1">
    <location>
        <begin position="169"/>
        <end position="171"/>
    </location>
    <ligand>
        <name>ATP</name>
        <dbReference type="ChEBI" id="CHEBI:30616"/>
    </ligand>
</feature>
<feature type="binding site" evidence="1">
    <location>
        <begin position="182"/>
        <end position="189"/>
    </location>
    <ligand>
        <name>ATP</name>
        <dbReference type="ChEBI" id="CHEBI:30616"/>
    </ligand>
</feature>
<feature type="binding site" evidence="1">
    <location>
        <begin position="397"/>
        <end position="399"/>
    </location>
    <ligand>
        <name>ATP</name>
        <dbReference type="ChEBI" id="CHEBI:30616"/>
    </ligand>
</feature>
<feature type="binding site" evidence="3">
    <location>
        <position position="482"/>
    </location>
    <ligand>
        <name>Mg(2+)</name>
        <dbReference type="ChEBI" id="CHEBI:18420"/>
        <label>1</label>
        <note>catalytic</note>
    </ligand>
</feature>
<feature type="binding site" evidence="3">
    <location>
        <position position="562"/>
    </location>
    <ligand>
        <name>Mg(2+)</name>
        <dbReference type="ChEBI" id="CHEBI:18420"/>
        <label>1</label>
        <note>catalytic</note>
    </ligand>
</feature>
<feature type="binding site" evidence="3 9">
    <location>
        <position position="562"/>
    </location>
    <ligand>
        <name>Mg(2+)</name>
        <dbReference type="ChEBI" id="CHEBI:18420"/>
        <label>2</label>
    </ligand>
</feature>
<feature type="binding site" evidence="3 9">
    <location>
        <position position="564"/>
    </location>
    <ligand>
        <name>Mg(2+)</name>
        <dbReference type="ChEBI" id="CHEBI:18420"/>
        <label>2</label>
    </ligand>
</feature>
<feature type="site" description="Interaction with DNA">
    <location>
        <position position="510"/>
    </location>
</feature>
<feature type="site" description="Interaction with DNA">
    <location>
        <position position="513"/>
    </location>
</feature>
<feature type="site" description="Interaction with DNA">
    <location>
        <position position="682"/>
    </location>
</feature>
<feature type="site" description="Interaction with DNA">
    <location>
        <position position="683"/>
    </location>
</feature>
<feature type="site" description="Interaction with DNA">
    <location>
        <position position="744"/>
    </location>
</feature>
<feature type="site" description="Interaction with DNA" evidence="3">
    <location>
        <position position="778"/>
    </location>
</feature>
<feature type="site" description="Transition state stabilizer">
    <location>
        <position position="825"/>
    </location>
</feature>
<feature type="site" description="Important for DNA bending; intercalates between base pairs of target DNA">
    <location>
        <position position="877"/>
    </location>
</feature>
<feature type="site" description="Interaction with DNA">
    <location>
        <position position="952"/>
    </location>
</feature>
<feature type="modified residue" description="N-acetylalanine" evidence="2">
    <location>
        <position position="2"/>
    </location>
</feature>
<feature type="modified residue" description="N6-acetyllysine" evidence="2">
    <location>
        <position position="3"/>
    </location>
</feature>
<feature type="modified residue" description="Phosphoserine" evidence="23 24 26">
    <location>
        <position position="1236"/>
    </location>
</feature>
<feature type="modified residue" description="Phosphothreonine" evidence="23">
    <location>
        <position position="1292"/>
    </location>
</feature>
<feature type="modified residue" description="Phosphoserine" evidence="19 22 24 25">
    <location>
        <position position="1336"/>
    </location>
</feature>
<feature type="modified residue" description="Phosphoserine" evidence="19 22 24 25">
    <location>
        <position position="1340"/>
    </location>
</feature>
<feature type="modified residue" description="Phosphoserine" evidence="22 23 24 25">
    <location>
        <position position="1342"/>
    </location>
</feature>
<feature type="modified residue" description="Phosphoserine" evidence="22 23 24 25">
    <location>
        <position position="1344"/>
    </location>
</feature>
<feature type="modified residue" description="Phosphoserine" evidence="25">
    <location>
        <position position="1358"/>
    </location>
</feature>
<feature type="modified residue" description="Phosphotyrosine" evidence="2">
    <location>
        <position position="1370"/>
    </location>
</feature>
<feature type="modified residue" description="Phosphoserine" evidence="22 23">
    <location>
        <position position="1375"/>
    </location>
</feature>
<feature type="modified residue" description="Phosphoserine" evidence="19 21 22 23 24 25 26 27">
    <location>
        <position position="1400"/>
    </location>
</feature>
<feature type="modified residue" description="Phosphothreonine" evidence="23">
    <location>
        <position position="1403"/>
    </location>
</feature>
<feature type="modified residue" description="Phosphoserine" evidence="19 21 22 23 24 25 26 27">
    <location>
        <position position="1413"/>
    </location>
</feature>
<feature type="modified residue" description="Phosphotyrosine" evidence="22">
    <location>
        <position position="1421"/>
    </location>
</feature>
<feature type="modified residue" description="Phosphoserine" evidence="22 23 24 25 26">
    <location>
        <position position="1424"/>
    </location>
</feature>
<feature type="modified residue" description="Phosphoserine" evidence="24 25">
    <location>
        <position position="1441"/>
    </location>
</feature>
<feature type="modified residue" description="Phosphoserine" evidence="24 26">
    <location>
        <position position="1452"/>
    </location>
</feature>
<feature type="modified residue" description="Phosphoserine" evidence="20 24 25 26">
    <location>
        <position position="1454"/>
    </location>
</feature>
<feature type="modified residue" description="Phosphoserine" evidence="23">
    <location>
        <position position="1461"/>
    </location>
</feature>
<feature type="modified residue" description="Phosphoserine" evidence="22 23 24 25 26">
    <location>
        <position position="1466"/>
    </location>
</feature>
<feature type="modified residue" description="Phosphoserine" evidence="23">
    <location>
        <position position="1473"/>
    </location>
</feature>
<feature type="modified residue" description="Phosphoserine" evidence="23 24">
    <location>
        <position position="1476"/>
    </location>
</feature>
<feature type="modified residue" description="Phosphoserine" evidence="23 24 25 26 27">
    <location>
        <position position="1522"/>
    </location>
</feature>
<feature type="modified residue" description="Phosphoserine" evidence="23 24 25 26 27">
    <location>
        <position position="1524"/>
    </location>
</feature>
<feature type="modified residue" description="Phosphoserine" evidence="24">
    <location>
        <position position="1526"/>
    </location>
</feature>
<feature type="modified residue" description="Phosphoserine" evidence="22 25 26 27">
    <location>
        <position position="1550"/>
    </location>
</feature>
<feature type="modified residue" description="Phosphoserine" evidence="22 26 27">
    <location>
        <position position="1552"/>
    </location>
</feature>
<feature type="modified residue" description="Phosphothreonine" evidence="23 27">
    <location>
        <position position="1575"/>
    </location>
</feature>
<feature type="modified residue" description="Phosphoserine" evidence="27">
    <location>
        <position position="1576"/>
    </location>
</feature>
<feature type="modified residue" description="Phosphoserine" evidence="21 22 23 25 27">
    <location>
        <position position="1581"/>
    </location>
</feature>
<feature type="modified residue" description="Phosphothreonine" evidence="22">
    <location>
        <position position="1592"/>
    </location>
</feature>
<feature type="modified residue" description="Phosphoserine" evidence="22">
    <location>
        <position position="1596"/>
    </location>
</feature>
<feature type="modified residue" description="Phosphotyrosine" evidence="22">
    <location>
        <position position="1609"/>
    </location>
</feature>
<feature type="modified residue" description="Phosphoserine" evidence="22 24 25">
    <location>
        <position position="1613"/>
    </location>
</feature>
<feature type="cross-link" description="Glycyl lysine isopeptide (Lys-Gly) (interchain with G-Cter in SUMO2)" evidence="31">
    <location>
        <position position="33"/>
    </location>
</feature>
<feature type="cross-link" description="Glycyl lysine isopeptide (Lys-Gly) (interchain with G-Cter in SUMO2)" evidence="28">
    <location>
        <position position="34"/>
    </location>
</feature>
<feature type="cross-link" description="Glycyl lysine isopeptide (Lys-Gly) (interchain with G-Cter in SUMO2)" evidence="30 31">
    <location>
        <position position="177"/>
    </location>
</feature>
<feature type="cross-link" description="Glycyl lysine isopeptide (Lys-Gly) (interchain with G-Cter in SUMO2)" evidence="31">
    <location>
        <position position="178"/>
    </location>
</feature>
<feature type="cross-link" description="Glycyl lysine isopeptide (Lys-Gly) (interchain with G-Cter in SUMO2)" evidence="31">
    <location>
        <position position="228"/>
    </location>
</feature>
<feature type="cross-link" description="Glycyl lysine isopeptide (Lys-Gly) (interchain with G-Cter in SUMO2)" evidence="31">
    <location>
        <position position="299"/>
    </location>
</feature>
<feature type="cross-link" description="Glycyl lysine isopeptide (Lys-Gly) (interchain with G-Cter in SUMO2)" evidence="31">
    <location>
        <position position="367"/>
    </location>
</feature>
<feature type="cross-link" description="Glycyl lysine isopeptide (Lys-Gly) (interchain with G-Cter in SUMO2)" evidence="30 31">
    <location>
        <position position="373"/>
    </location>
</feature>
<feature type="cross-link" description="Glycyl lysine isopeptide (Lys-Gly) (interchain with G-Cter in SUMO2)" evidence="30 31">
    <location>
        <position position="437"/>
    </location>
</feature>
<feature type="cross-link" description="Glycyl lysine isopeptide (Lys-Gly) (interchain with G-Cter in SUMO2)" evidence="31">
    <location>
        <position position="439"/>
    </location>
</feature>
<feature type="cross-link" description="Glycyl lysine isopeptide (Lys-Gly) (interchain with G-Cter in SUMO2)" evidence="31">
    <location>
        <position position="446"/>
    </location>
</feature>
<feature type="cross-link" description="Glycyl lysine isopeptide (Lys-Gly) (interchain with G-Cter in SUMO2)" evidence="31">
    <location>
        <position position="600"/>
    </location>
</feature>
<feature type="cross-link" description="Glycyl lysine isopeptide (Lys-Gly) (interchain with G-Cter in SUMO2)" evidence="30 31">
    <location>
        <position position="605"/>
    </location>
</feature>
<feature type="cross-link" description="Glycyl lysine isopeptide (Lys-Gly) (interchain with G-Cter in SUMO2)" evidence="31">
    <location>
        <position position="635"/>
    </location>
</feature>
<feature type="cross-link" description="Glycyl lysine isopeptide (Lys-Gly) (interchain with G-Cter in SUMO2)" evidence="30 31">
    <location>
        <position position="643"/>
    </location>
</feature>
<feature type="cross-link" description="Glycyl lysine isopeptide (Lys-Gly) (interchain with G-Cter in SUMO2)" evidence="31">
    <location>
        <position position="646"/>
    </location>
</feature>
<feature type="cross-link" description="Glycyl lysine isopeptide (Lys-Gly) (interchain with G-Cter in SUMO2)" evidence="31">
    <location>
        <position position="676"/>
    </location>
</feature>
<feature type="cross-link" description="Glycyl lysine isopeptide (Lys-Gly) (interchain with G-Cter in SUMO2)" evidence="31">
    <location>
        <position position="712"/>
    </location>
</feature>
<feature type="cross-link" description="Glycyl lysine isopeptide (Lys-Gly) (interchain with G-Cter in SUMO2)" evidence="31">
    <location>
        <position position="1092"/>
    </location>
</feature>
<feature type="cross-link" description="Glycyl lysine isopeptide (Lys-Gly) (interchain with G-Cter in SUMO2)" evidence="31">
    <location>
        <position position="1214"/>
    </location>
</feature>
<feature type="cross-link" description="Glycyl lysine isopeptide (Lys-Gly) (interchain with G-Cter in SUMO2)" evidence="31">
    <location>
        <position position="1217"/>
    </location>
</feature>
<feature type="cross-link" description="Glycyl lysine isopeptide (Lys-Gly) (interchain with G-Cter in SUMO2)" evidence="31">
    <location>
        <position position="1226"/>
    </location>
</feature>
<feature type="cross-link" description="Glycyl lysine isopeptide (Lys-Gly) (interchain with G-Cter in SUMO2)" evidence="28 30 31">
    <location>
        <position position="1227"/>
    </location>
</feature>
<feature type="cross-link" description="Glycyl lysine isopeptide (Lys-Gly) (interchain with G-Cter in SUMO2)" evidence="29 31">
    <location>
        <position position="1250"/>
    </location>
</feature>
<feature type="cross-link" description="Glycyl lysine isopeptide (Lys-Gly) (interchain with G-Cter in SUMO2)" evidence="31">
    <location>
        <position position="1262"/>
    </location>
</feature>
<feature type="cross-link" description="Glycyl lysine isopeptide (Lys-Gly) (interchain with G-Cter in SUMO2)" evidence="28 31">
    <location>
        <position position="1271"/>
    </location>
</feature>
<feature type="cross-link" description="Glycyl lysine isopeptide (Lys-Gly) (interchain with G-Cter in SUMO2)" evidence="31">
    <location>
        <position position="1323"/>
    </location>
</feature>
<feature type="cross-link" description="Glycyl lysine isopeptide (Lys-Gly) (interchain with G-Cter in SUMO2)" evidence="31">
    <location>
        <position position="1327"/>
    </location>
</feature>
<feature type="cross-link" description="Glycyl lysine isopeptide (Lys-Gly) (interchain with G-Cter in SUMO2)" evidence="31">
    <location>
        <position position="1398"/>
    </location>
</feature>
<feature type="cross-link" description="Glycyl lysine isopeptide (Lys-Gly) (interchain with G-Cter in SUMO2)" evidence="28 30 31">
    <location>
        <position position="1440"/>
    </location>
</feature>
<feature type="cross-link" description="Glycyl lysine isopeptide (Lys-Gly) (interchain with G-Cter in SUMO2)" evidence="28 30 31">
    <location>
        <position position="1456"/>
    </location>
</feature>
<feature type="cross-link" description="Glycyl lysine isopeptide (Lys-Gly) (interchain with G-Cter in SUMO2)" evidence="31">
    <location>
        <position position="1490"/>
    </location>
</feature>
<feature type="splice variant" id="VSP_006532" description="In isoform Beta-1." evidence="18">
    <location>
        <begin position="24"/>
        <end position="28"/>
    </location>
</feature>
<feature type="sequence variant" id="VAR_079273" description="Found in patients with global developmental delay and autism spectrum disorder; likely pathogenic; dbSNP:rs886039770." evidence="10 12">
    <original>H</original>
    <variation>Y</variation>
    <location>
        <position position="63"/>
    </location>
</feature>
<feature type="sequence variant" id="VAR_086569" description="In BILU; loss-of-function variant in a yeast complementation assay; dbSNP:rs2125377904." evidence="11">
    <original>S</original>
    <variation>L</variation>
    <location>
        <position position="488"/>
    </location>
</feature>
<feature type="sequence variant" id="VAR_086570" description="In BILU; decreased protein abundance; severely decreased DNA topoisomerase type II (double strand cut, ATP-hydrolyzing) activity; dbSNP:rs2125377898." evidence="13">
    <original>A</original>
    <variation>P</variation>
    <location>
        <position position="490"/>
    </location>
</feature>
<feature type="sequence variant" id="VAR_086571" description="In BILU; loss-of-function variant in a yeast complementation assay." evidence="11 14">
    <location>
        <position position="593"/>
    </location>
</feature>
<feature type="sequence variant" id="VAR_086572" description="In BILU; loss-of-function variant in a yeast complementation assay; dbSNP:rs2125373730." evidence="11">
    <original>G</original>
    <variation>S</variation>
    <location>
        <position position="638"/>
    </location>
</feature>
<feature type="mutagenesis site" description="Strongly reduced enzyme activity." evidence="6">
    <original>E</original>
    <variation>Q</variation>
    <location>
        <position position="482"/>
    </location>
</feature>
<feature type="mutagenesis site" description="Slightly reduced enzyme activity." evidence="6">
    <original>S</original>
    <variation>A</variation>
    <location>
        <position position="485"/>
    </location>
</feature>
<feature type="mutagenesis site" description="Slightly reduced enzyme activity." evidence="6">
    <original>R</original>
    <variation>E</variation>
    <location>
        <position position="508"/>
    </location>
</feature>
<feature type="mutagenesis site" description="Strongly reduced enzyme activity." evidence="6">
    <original>K</original>
    <variation>E</variation>
    <location>
        <position position="510"/>
    </location>
</feature>
<feature type="mutagenesis site" description="Slightly reduced enzyme activity." evidence="6">
    <original>R</original>
    <variation>Q</variation>
    <location>
        <position position="515"/>
    </location>
</feature>
<feature type="sequence conflict" description="In Ref. 4; CAA78821/CAA09753." evidence="18" ref="4">
    <original>T</original>
    <variation>S</variation>
    <location>
        <position position="1431"/>
    </location>
</feature>
<feature type="sequence conflict" description="In Ref. 1; CAA48197." evidence="18" ref="1">
    <original>A</original>
    <variation>T</variation>
    <location>
        <position position="1611"/>
    </location>
</feature>
<feature type="sequence conflict" description="In Ref. 4; CAA09753." evidence="18" ref="4">
    <original>D</original>
    <variation>H</variation>
    <location>
        <position position="1621"/>
    </location>
</feature>
<feature type="turn" evidence="39">
    <location>
        <begin position="52"/>
        <end position="54"/>
    </location>
</feature>
<feature type="helix" evidence="39">
    <location>
        <begin position="60"/>
        <end position="66"/>
    </location>
</feature>
<feature type="helix" evidence="39">
    <location>
        <begin position="69"/>
        <end position="72"/>
    </location>
</feature>
<feature type="strand" evidence="39">
    <location>
        <begin position="78"/>
        <end position="86"/>
    </location>
</feature>
<feature type="turn" evidence="39">
    <location>
        <begin position="87"/>
        <end position="89"/>
    </location>
</feature>
<feature type="strand" evidence="39">
    <location>
        <begin position="90"/>
        <end position="98"/>
    </location>
</feature>
<feature type="helix" evidence="39">
    <location>
        <begin position="100"/>
        <end position="119"/>
    </location>
</feature>
<feature type="strand" evidence="39">
    <location>
        <begin position="125"/>
        <end position="131"/>
    </location>
</feature>
<feature type="turn" evidence="39">
    <location>
        <begin position="132"/>
        <end position="135"/>
    </location>
</feature>
<feature type="strand" evidence="39">
    <location>
        <begin position="136"/>
        <end position="141"/>
    </location>
</feature>
<feature type="strand" evidence="38">
    <location>
        <begin position="149"/>
        <end position="151"/>
    </location>
</feature>
<feature type="turn" evidence="39">
    <location>
        <begin position="152"/>
        <end position="154"/>
    </location>
</feature>
<feature type="helix" evidence="39">
    <location>
        <begin position="158"/>
        <end position="164"/>
    </location>
</feature>
<feature type="strand" evidence="39">
    <location>
        <begin position="165"/>
        <end position="167"/>
    </location>
</feature>
<feature type="helix" evidence="39">
    <location>
        <begin position="174"/>
        <end position="176"/>
    </location>
</feature>
<feature type="helix" evidence="39">
    <location>
        <begin position="187"/>
        <end position="193"/>
    </location>
</feature>
<feature type="strand" evidence="39">
    <location>
        <begin position="195"/>
        <end position="204"/>
    </location>
</feature>
<feature type="turn" evidence="39">
    <location>
        <begin position="205"/>
        <end position="208"/>
    </location>
</feature>
<feature type="strand" evidence="39">
    <location>
        <begin position="209"/>
        <end position="216"/>
    </location>
</feature>
<feature type="turn" evidence="39">
    <location>
        <begin position="217"/>
        <end position="220"/>
    </location>
</feature>
<feature type="strand" evidence="39">
    <location>
        <begin position="226"/>
        <end position="229"/>
    </location>
</feature>
<feature type="strand" evidence="39">
    <location>
        <begin position="235"/>
        <end position="242"/>
    </location>
</feature>
<feature type="helix" evidence="39">
    <location>
        <begin position="244"/>
        <end position="247"/>
    </location>
</feature>
<feature type="helix" evidence="39">
    <location>
        <begin position="254"/>
        <end position="270"/>
    </location>
</feature>
<feature type="strand" evidence="39">
    <location>
        <begin position="275"/>
        <end position="278"/>
    </location>
</feature>
<feature type="helix" evidence="39">
    <location>
        <begin position="288"/>
        <end position="296"/>
    </location>
</feature>
<feature type="strand" evidence="39">
    <location>
        <begin position="310"/>
        <end position="315"/>
    </location>
</feature>
<feature type="strand" evidence="39">
    <location>
        <begin position="318"/>
        <end position="324"/>
    </location>
</feature>
<feature type="strand" evidence="39">
    <location>
        <begin position="326"/>
        <end position="328"/>
    </location>
</feature>
<feature type="strand" evidence="39">
    <location>
        <begin position="330"/>
        <end position="335"/>
    </location>
</feature>
<feature type="strand" evidence="40">
    <location>
        <begin position="341"/>
        <end position="344"/>
    </location>
</feature>
<feature type="helix" evidence="39">
    <location>
        <begin position="345"/>
        <end position="363"/>
    </location>
</feature>
<feature type="helix" evidence="39">
    <location>
        <begin position="374"/>
        <end position="378"/>
    </location>
</feature>
<feature type="strand" evidence="39">
    <location>
        <begin position="381"/>
        <end position="387"/>
    </location>
</feature>
<feature type="strand" evidence="39">
    <location>
        <begin position="394"/>
        <end position="396"/>
    </location>
</feature>
<feature type="helix" evidence="39">
    <location>
        <begin position="406"/>
        <end position="408"/>
    </location>
</feature>
<feature type="strand" evidence="39">
    <location>
        <begin position="409"/>
        <end position="411"/>
    </location>
</feature>
<feature type="helix" evidence="39">
    <location>
        <begin position="417"/>
        <end position="424"/>
    </location>
</feature>
<feature type="turn" evidence="39">
    <location>
        <begin position="425"/>
        <end position="427"/>
    </location>
</feature>
<feature type="helix" evidence="39">
    <location>
        <begin position="428"/>
        <end position="433"/>
    </location>
</feature>
<feature type="turn" evidence="32">
    <location>
        <begin position="466"/>
        <end position="469"/>
    </location>
</feature>
<feature type="strand" evidence="33">
    <location>
        <begin position="470"/>
        <end position="472"/>
    </location>
</feature>
<feature type="helix" evidence="32">
    <location>
        <begin position="473"/>
        <end position="475"/>
    </location>
</feature>
<feature type="strand" evidence="32">
    <location>
        <begin position="477"/>
        <end position="482"/>
    </location>
</feature>
<feature type="helix" evidence="32">
    <location>
        <begin position="483"/>
        <end position="491"/>
    </location>
</feature>
<feature type="turn" evidence="36">
    <location>
        <begin position="494"/>
        <end position="496"/>
    </location>
</feature>
<feature type="helix" evidence="32">
    <location>
        <begin position="497"/>
        <end position="499"/>
    </location>
</feature>
<feature type="strand" evidence="32">
    <location>
        <begin position="502"/>
        <end position="507"/>
    </location>
</feature>
<feature type="helix" evidence="37">
    <location>
        <begin position="514"/>
        <end position="516"/>
    </location>
</feature>
<feature type="helix" evidence="32">
    <location>
        <begin position="519"/>
        <end position="524"/>
    </location>
</feature>
<feature type="helix" evidence="32">
    <location>
        <begin position="526"/>
        <end position="535"/>
    </location>
</feature>
<feature type="strand" evidence="34">
    <location>
        <begin position="545"/>
        <end position="547"/>
    </location>
</feature>
<feature type="helix" evidence="32">
    <location>
        <begin position="548"/>
        <end position="551"/>
    </location>
</feature>
<feature type="strand" evidence="32">
    <location>
        <begin position="555"/>
        <end position="560"/>
    </location>
</feature>
<feature type="helix" evidence="32">
    <location>
        <begin position="565"/>
        <end position="581"/>
    </location>
</feature>
<feature type="helix" evidence="32">
    <location>
        <begin position="583"/>
        <end position="587"/>
    </location>
</feature>
<feature type="strand" evidence="32">
    <location>
        <begin position="591"/>
        <end position="594"/>
    </location>
</feature>
<feature type="strand" evidence="37">
    <location>
        <begin position="598"/>
        <end position="602"/>
    </location>
</feature>
<feature type="strand" evidence="37">
    <location>
        <begin position="607"/>
        <end position="612"/>
    </location>
</feature>
<feature type="helix" evidence="37">
    <location>
        <begin position="613"/>
        <end position="617"/>
    </location>
</feature>
<feature type="helix" evidence="41">
    <location>
        <begin position="623"/>
        <end position="625"/>
    </location>
</feature>
<feature type="strand" evidence="37">
    <location>
        <begin position="630"/>
        <end position="633"/>
    </location>
</feature>
<feature type="helix" evidence="37">
    <location>
        <begin position="637"/>
        <end position="639"/>
    </location>
</feature>
<feature type="helix" evidence="32">
    <location>
        <begin position="644"/>
        <end position="650"/>
    </location>
</feature>
<feature type="helix" evidence="32">
    <location>
        <begin position="652"/>
        <end position="655"/>
    </location>
</feature>
<feature type="strand" evidence="32">
    <location>
        <begin position="656"/>
        <end position="660"/>
    </location>
</feature>
<feature type="helix" evidence="32">
    <location>
        <begin position="664"/>
        <end position="674"/>
    </location>
</feature>
<feature type="helix" evidence="32">
    <location>
        <begin position="676"/>
        <end position="678"/>
    </location>
</feature>
<feature type="helix" evidence="32">
    <location>
        <begin position="679"/>
        <end position="698"/>
    </location>
</feature>
<feature type="strand" evidence="37">
    <location>
        <begin position="706"/>
        <end position="710"/>
    </location>
</feature>
<feature type="strand" evidence="32">
    <location>
        <begin position="713"/>
        <end position="715"/>
    </location>
</feature>
<feature type="helix" evidence="32">
    <location>
        <begin position="716"/>
        <end position="722"/>
    </location>
</feature>
<feature type="helix" evidence="32">
    <location>
        <begin position="724"/>
        <end position="735"/>
    </location>
</feature>
<feature type="turn" evidence="32">
    <location>
        <begin position="739"/>
        <end position="741"/>
    </location>
</feature>
<feature type="helix" evidence="32">
    <location>
        <begin position="745"/>
        <end position="757"/>
    </location>
</feature>
<feature type="helix" evidence="32">
    <location>
        <begin position="765"/>
        <end position="776"/>
    </location>
</feature>
<feature type="helix" evidence="32">
    <location>
        <begin position="782"/>
        <end position="793"/>
    </location>
</feature>
<feature type="turn" evidence="32">
    <location>
        <begin position="814"/>
        <end position="820"/>
    </location>
</feature>
<feature type="helix" evidence="35">
    <location>
        <begin position="824"/>
        <end position="826"/>
    </location>
</feature>
<feature type="helix" evidence="32">
    <location>
        <begin position="835"/>
        <end position="838"/>
    </location>
</feature>
<feature type="helix" evidence="32">
    <location>
        <begin position="841"/>
        <end position="844"/>
    </location>
</feature>
<feature type="strand" evidence="32">
    <location>
        <begin position="849"/>
        <end position="852"/>
    </location>
</feature>
<feature type="strand" evidence="32">
    <location>
        <begin position="855"/>
        <end position="860"/>
    </location>
</feature>
<feature type="helix" evidence="32">
    <location>
        <begin position="868"/>
        <end position="871"/>
    </location>
</feature>
<feature type="strand" evidence="32">
    <location>
        <begin position="875"/>
        <end position="877"/>
    </location>
</feature>
<feature type="strand" evidence="32">
    <location>
        <begin position="882"/>
        <end position="884"/>
    </location>
</feature>
<feature type="helix" evidence="32">
    <location>
        <begin position="890"/>
        <end position="901"/>
    </location>
</feature>
<feature type="strand" evidence="32">
    <location>
        <begin position="918"/>
        <end position="924"/>
    </location>
</feature>
<feature type="strand" evidence="32">
    <location>
        <begin position="927"/>
        <end position="931"/>
    </location>
</feature>
<feature type="strand" evidence="32">
    <location>
        <begin position="933"/>
        <end position="938"/>
    </location>
</feature>
<feature type="strand" evidence="32">
    <location>
        <begin position="941"/>
        <end position="946"/>
    </location>
</feature>
<feature type="helix" evidence="32">
    <location>
        <begin position="953"/>
        <end position="959"/>
    </location>
</feature>
<feature type="helix" evidence="32">
    <location>
        <begin position="961"/>
        <end position="966"/>
    </location>
</feature>
<feature type="strand" evidence="32">
    <location>
        <begin position="969"/>
        <end position="971"/>
    </location>
</feature>
<feature type="strand" evidence="32">
    <location>
        <begin position="976"/>
        <end position="980"/>
    </location>
</feature>
<feature type="strand" evidence="32">
    <location>
        <begin position="989"/>
        <end position="992"/>
    </location>
</feature>
<feature type="helix" evidence="32">
    <location>
        <begin position="995"/>
        <end position="1004"/>
    </location>
</feature>
<feature type="helix" evidence="32">
    <location>
        <begin position="1006"/>
        <end position="1009"/>
    </location>
</feature>
<feature type="strand" evidence="32">
    <location>
        <begin position="1013"/>
        <end position="1017"/>
    </location>
</feature>
<feature type="strand" evidence="32">
    <location>
        <begin position="1021"/>
        <end position="1024"/>
    </location>
</feature>
<feature type="strand" evidence="32">
    <location>
        <begin position="1030"/>
        <end position="1034"/>
    </location>
</feature>
<feature type="helix" evidence="32">
    <location>
        <begin position="1036"/>
        <end position="1080"/>
    </location>
</feature>
<feature type="helix" evidence="32">
    <location>
        <begin position="1091"/>
        <end position="1100"/>
    </location>
</feature>
<feature type="helix" evidence="32">
    <location>
        <begin position="1107"/>
        <end position="1114"/>
    </location>
</feature>
<feature type="helix" evidence="32">
    <location>
        <begin position="1144"/>
        <end position="1147"/>
    </location>
</feature>
<feature type="helix" evidence="32">
    <location>
        <begin position="1151"/>
        <end position="1154"/>
    </location>
</feature>
<feature type="helix" evidence="32">
    <location>
        <begin position="1156"/>
        <end position="1177"/>
    </location>
</feature>
<feature type="helix" evidence="32">
    <location>
        <begin position="1181"/>
        <end position="1205"/>
    </location>
</feature>
<feature type="cross-link" description="Glycyl lysine isopeptide (Lys-Gly) (interchain with G-Cter in SUMO2)" evidence="28 30 31">
    <location sequence="Q02880-2">
        <position position="28"/>
    </location>
</feature>
<feature type="cross-link" description="Glycyl lysine isopeptide (Lys-Gly) (interchain with G-Cter in SUMO2)" evidence="31">
    <location sequence="Q02880-2">
        <position position="29"/>
    </location>
</feature>
<proteinExistence type="evidence at protein level"/>
<organism>
    <name type="scientific">Homo sapiens</name>
    <name type="common">Human</name>
    <dbReference type="NCBI Taxonomy" id="9606"/>
    <lineage>
        <taxon>Eukaryota</taxon>
        <taxon>Metazoa</taxon>
        <taxon>Chordata</taxon>
        <taxon>Craniata</taxon>
        <taxon>Vertebrata</taxon>
        <taxon>Euteleostomi</taxon>
        <taxon>Mammalia</taxon>
        <taxon>Eutheria</taxon>
        <taxon>Euarchontoglires</taxon>
        <taxon>Primates</taxon>
        <taxon>Haplorrhini</taxon>
        <taxon>Catarrhini</taxon>
        <taxon>Hominidae</taxon>
        <taxon>Homo</taxon>
    </lineage>
</organism>